<proteinExistence type="evidence at protein level"/>
<dbReference type="EC" id="3.1.3.95" evidence="16 19"/>
<dbReference type="EMBL" id="U46024">
    <property type="protein sequence ID" value="AAC51682.1"/>
    <property type="molecule type" value="mRNA"/>
</dbReference>
<dbReference type="EMBL" id="AF020676">
    <property type="protein sequence ID" value="AAC12865.1"/>
    <property type="molecule type" value="Genomic_DNA"/>
</dbReference>
<dbReference type="EMBL" id="AF020664">
    <property type="protein sequence ID" value="AAC12865.1"/>
    <property type="status" value="JOINED"/>
    <property type="molecule type" value="Genomic_DNA"/>
</dbReference>
<dbReference type="EMBL" id="AF020665">
    <property type="protein sequence ID" value="AAC12865.1"/>
    <property type="status" value="JOINED"/>
    <property type="molecule type" value="Genomic_DNA"/>
</dbReference>
<dbReference type="EMBL" id="AF020666">
    <property type="protein sequence ID" value="AAC12865.1"/>
    <property type="status" value="JOINED"/>
    <property type="molecule type" value="Genomic_DNA"/>
</dbReference>
<dbReference type="EMBL" id="AF020667">
    <property type="protein sequence ID" value="AAC12865.1"/>
    <property type="status" value="JOINED"/>
    <property type="molecule type" value="Genomic_DNA"/>
</dbReference>
<dbReference type="EMBL" id="AF020668">
    <property type="protein sequence ID" value="AAC12865.1"/>
    <property type="status" value="JOINED"/>
    <property type="molecule type" value="Genomic_DNA"/>
</dbReference>
<dbReference type="EMBL" id="AF020669">
    <property type="protein sequence ID" value="AAC12865.1"/>
    <property type="status" value="JOINED"/>
    <property type="molecule type" value="Genomic_DNA"/>
</dbReference>
<dbReference type="EMBL" id="AF020670">
    <property type="protein sequence ID" value="AAC12865.1"/>
    <property type="status" value="JOINED"/>
    <property type="molecule type" value="Genomic_DNA"/>
</dbReference>
<dbReference type="EMBL" id="AF020671">
    <property type="protein sequence ID" value="AAC12865.1"/>
    <property type="status" value="JOINED"/>
    <property type="molecule type" value="Genomic_DNA"/>
</dbReference>
<dbReference type="EMBL" id="AF020672">
    <property type="protein sequence ID" value="AAC12865.1"/>
    <property type="status" value="JOINED"/>
    <property type="molecule type" value="Genomic_DNA"/>
</dbReference>
<dbReference type="EMBL" id="AF020673">
    <property type="protein sequence ID" value="AAC12865.1"/>
    <property type="status" value="JOINED"/>
    <property type="molecule type" value="Genomic_DNA"/>
</dbReference>
<dbReference type="EMBL" id="AF020674">
    <property type="protein sequence ID" value="AAC12865.1"/>
    <property type="status" value="JOINED"/>
    <property type="molecule type" value="Genomic_DNA"/>
</dbReference>
<dbReference type="EMBL" id="AF020675">
    <property type="protein sequence ID" value="AAC12865.1"/>
    <property type="status" value="JOINED"/>
    <property type="molecule type" value="Genomic_DNA"/>
</dbReference>
<dbReference type="EMBL" id="AK297021">
    <property type="protein sequence ID" value="BAH12477.1"/>
    <property type="molecule type" value="mRNA"/>
</dbReference>
<dbReference type="EMBL" id="AC109994">
    <property type="status" value="NOT_ANNOTATED_CDS"/>
    <property type="molecule type" value="Genomic_DNA"/>
</dbReference>
<dbReference type="EMBL" id="AF002223">
    <property type="status" value="NOT_ANNOTATED_CDS"/>
    <property type="molecule type" value="Genomic_DNA"/>
</dbReference>
<dbReference type="EMBL" id="CH471169">
    <property type="protein sequence ID" value="EAW99377.1"/>
    <property type="molecule type" value="Genomic_DNA"/>
</dbReference>
<dbReference type="EMBL" id="BC030779">
    <property type="protein sequence ID" value="AAH30779.1"/>
    <property type="molecule type" value="mRNA"/>
</dbReference>
<dbReference type="CCDS" id="CCDS14694.1">
    <molecule id="Q13496-1"/>
</dbReference>
<dbReference type="RefSeq" id="NP_000243.1">
    <molecule id="Q13496-1"/>
    <property type="nucleotide sequence ID" value="NM_000252.3"/>
</dbReference>
<dbReference type="RefSeq" id="NP_001363836.1">
    <molecule id="Q13496-2"/>
    <property type="nucleotide sequence ID" value="NM_001376907.1"/>
</dbReference>
<dbReference type="RefSeq" id="NP_001363837.1">
    <molecule id="Q13496-1"/>
    <property type="nucleotide sequence ID" value="NM_001376908.1"/>
</dbReference>
<dbReference type="RefSeq" id="XP_005274744.1">
    <property type="nucleotide sequence ID" value="XM_005274687.2"/>
</dbReference>
<dbReference type="RefSeq" id="XP_011529475.1">
    <property type="nucleotide sequence ID" value="XM_011531173.2"/>
</dbReference>
<dbReference type="RefSeq" id="XP_016885039.1">
    <property type="nucleotide sequence ID" value="XM_017029550.1"/>
</dbReference>
<dbReference type="SMR" id="Q13496"/>
<dbReference type="BioGRID" id="110630">
    <property type="interactions" value="72"/>
</dbReference>
<dbReference type="DIP" id="DIP-61934N"/>
<dbReference type="FunCoup" id="Q13496">
    <property type="interactions" value="845"/>
</dbReference>
<dbReference type="IntAct" id="Q13496">
    <property type="interactions" value="25"/>
</dbReference>
<dbReference type="MINT" id="Q13496"/>
<dbReference type="STRING" id="9606.ENSP00000359423"/>
<dbReference type="SwissLipids" id="SLP:000000846"/>
<dbReference type="SwissLipids" id="SLP:000000847"/>
<dbReference type="DEPOD" id="MTM1"/>
<dbReference type="iPTMnet" id="Q13496"/>
<dbReference type="PhosphoSitePlus" id="Q13496"/>
<dbReference type="BioMuta" id="MTM1"/>
<dbReference type="DMDM" id="2851537"/>
<dbReference type="jPOST" id="Q13496"/>
<dbReference type="MassIVE" id="Q13496"/>
<dbReference type="PaxDb" id="9606-ENSP00000359423"/>
<dbReference type="PeptideAtlas" id="Q13496"/>
<dbReference type="ProteomicsDB" id="59495">
    <molecule id="Q13496-1"/>
</dbReference>
<dbReference type="ProteomicsDB" id="6581"/>
<dbReference type="Pumba" id="Q13496"/>
<dbReference type="Antibodypedia" id="544">
    <property type="antibodies" value="317 antibodies from 35 providers"/>
</dbReference>
<dbReference type="DNASU" id="4534"/>
<dbReference type="Ensembl" id="ENST00000370396.7">
    <molecule id="Q13496-1"/>
    <property type="protein sequence ID" value="ENSP00000359423.3"/>
    <property type="gene ID" value="ENSG00000171100.16"/>
</dbReference>
<dbReference type="Ensembl" id="ENST00000685944.1">
    <molecule id="Q13496-1"/>
    <property type="protein sequence ID" value="ENSP00000509266.1"/>
    <property type="gene ID" value="ENSG00000171100.16"/>
</dbReference>
<dbReference type="Ensembl" id="ENST00000689694.1">
    <molecule id="Q13496-1"/>
    <property type="protein sequence ID" value="ENSP00000508718.1"/>
    <property type="gene ID" value="ENSG00000171100.16"/>
</dbReference>
<dbReference type="GeneID" id="4534"/>
<dbReference type="KEGG" id="hsa:4534"/>
<dbReference type="MANE-Select" id="ENST00000370396.7">
    <property type="protein sequence ID" value="ENSP00000359423.3"/>
    <property type="RefSeq nucleotide sequence ID" value="NM_000252.3"/>
    <property type="RefSeq protein sequence ID" value="NP_000243.1"/>
</dbReference>
<dbReference type="UCSC" id="uc004fef.5">
    <molecule id="Q13496-1"/>
    <property type="organism name" value="human"/>
</dbReference>
<dbReference type="AGR" id="HGNC:7448"/>
<dbReference type="CTD" id="4534"/>
<dbReference type="DisGeNET" id="4534"/>
<dbReference type="GeneCards" id="MTM1"/>
<dbReference type="GeneReviews" id="MTM1"/>
<dbReference type="HGNC" id="HGNC:7448">
    <property type="gene designation" value="MTM1"/>
</dbReference>
<dbReference type="HPA" id="ENSG00000171100">
    <property type="expression patterns" value="Low tissue specificity"/>
</dbReference>
<dbReference type="MalaCards" id="MTM1"/>
<dbReference type="MIM" id="300415">
    <property type="type" value="gene"/>
</dbReference>
<dbReference type="MIM" id="310400">
    <property type="type" value="phenotype"/>
</dbReference>
<dbReference type="neXtProt" id="NX_Q13496"/>
<dbReference type="OpenTargets" id="ENSG00000171100"/>
<dbReference type="Orphanet" id="596">
    <property type="disease" value="X-linked centronuclear myopathy"/>
</dbReference>
<dbReference type="Orphanet" id="456328">
    <property type="disease" value="X-linked myotubular myopathy-abnormal genitalia syndrome"/>
</dbReference>
<dbReference type="PharmGKB" id="PA31251"/>
<dbReference type="VEuPathDB" id="HostDB:ENSG00000171100"/>
<dbReference type="eggNOG" id="KOG4471">
    <property type="taxonomic scope" value="Eukaryota"/>
</dbReference>
<dbReference type="GeneTree" id="ENSGT00940000157029"/>
<dbReference type="HOGENOM" id="CLU_001839_4_1_1"/>
<dbReference type="InParanoid" id="Q13496"/>
<dbReference type="OMA" id="PFRATDE"/>
<dbReference type="OrthoDB" id="271628at2759"/>
<dbReference type="PAN-GO" id="Q13496">
    <property type="GO annotations" value="9 GO annotations based on evolutionary models"/>
</dbReference>
<dbReference type="PhylomeDB" id="Q13496"/>
<dbReference type="TreeFam" id="TF315197"/>
<dbReference type="BRENDA" id="3.1.3.64">
    <property type="organism ID" value="2681"/>
</dbReference>
<dbReference type="BRENDA" id="3.1.3.95">
    <property type="organism ID" value="2681"/>
</dbReference>
<dbReference type="PathwayCommons" id="Q13496"/>
<dbReference type="Reactome" id="R-HSA-1660499">
    <property type="pathway name" value="Synthesis of PIPs at the plasma membrane"/>
</dbReference>
<dbReference type="Reactome" id="R-HSA-1660516">
    <property type="pathway name" value="Synthesis of PIPs at the early endosome membrane"/>
</dbReference>
<dbReference type="Reactome" id="R-HSA-1660517">
    <property type="pathway name" value="Synthesis of PIPs at the late endosome membrane"/>
</dbReference>
<dbReference type="SABIO-RK" id="Q13496"/>
<dbReference type="SignaLink" id="Q13496"/>
<dbReference type="SIGNOR" id="Q13496"/>
<dbReference type="BioGRID-ORCS" id="4534">
    <property type="hits" value="13 hits in 796 CRISPR screens"/>
</dbReference>
<dbReference type="ChiTaRS" id="MTM1">
    <property type="organism name" value="human"/>
</dbReference>
<dbReference type="GeneWiki" id="Myotubularin_1"/>
<dbReference type="GenomeRNAi" id="4534"/>
<dbReference type="Pharos" id="Q13496">
    <property type="development level" value="Tbio"/>
</dbReference>
<dbReference type="PRO" id="PR:Q13496"/>
<dbReference type="Proteomes" id="UP000005640">
    <property type="component" value="Chromosome X"/>
</dbReference>
<dbReference type="RNAct" id="Q13496">
    <property type="molecule type" value="protein"/>
</dbReference>
<dbReference type="Bgee" id="ENSG00000171100">
    <property type="expression patterns" value="Expressed in secondary oocyte and 190 other cell types or tissues"/>
</dbReference>
<dbReference type="ExpressionAtlas" id="Q13496">
    <property type="expression patterns" value="baseline and differential"/>
</dbReference>
<dbReference type="GO" id="GO:0005737">
    <property type="term" value="C:cytoplasm"/>
    <property type="evidence" value="ECO:0000314"/>
    <property type="project" value="UniProtKB"/>
</dbReference>
<dbReference type="GO" id="GO:0005829">
    <property type="term" value="C:cytosol"/>
    <property type="evidence" value="ECO:0000314"/>
    <property type="project" value="HPA"/>
</dbReference>
<dbReference type="GO" id="GO:0030175">
    <property type="term" value="C:filopodium"/>
    <property type="evidence" value="ECO:0000314"/>
    <property type="project" value="UniProtKB"/>
</dbReference>
<dbReference type="GO" id="GO:0031674">
    <property type="term" value="C:I band"/>
    <property type="evidence" value="ECO:0007669"/>
    <property type="project" value="Ensembl"/>
</dbReference>
<dbReference type="GO" id="GO:0005770">
    <property type="term" value="C:late endosome"/>
    <property type="evidence" value="ECO:0000314"/>
    <property type="project" value="UniProtKB"/>
</dbReference>
<dbReference type="GO" id="GO:0016020">
    <property type="term" value="C:membrane"/>
    <property type="evidence" value="ECO:0000318"/>
    <property type="project" value="GO_Central"/>
</dbReference>
<dbReference type="GO" id="GO:0005886">
    <property type="term" value="C:plasma membrane"/>
    <property type="evidence" value="ECO:0000314"/>
    <property type="project" value="HPA"/>
</dbReference>
<dbReference type="GO" id="GO:0001726">
    <property type="term" value="C:ruffle"/>
    <property type="evidence" value="ECO:0000314"/>
    <property type="project" value="UniProtKB"/>
</dbReference>
<dbReference type="GO" id="GO:0019215">
    <property type="term" value="F:intermediate filament binding"/>
    <property type="evidence" value="ECO:0000314"/>
    <property type="project" value="UniProtKB"/>
</dbReference>
<dbReference type="GO" id="GO:0035091">
    <property type="term" value="F:phosphatidylinositol binding"/>
    <property type="evidence" value="ECO:0000314"/>
    <property type="project" value="UniProtKB"/>
</dbReference>
<dbReference type="GO" id="GO:0052629">
    <property type="term" value="F:phosphatidylinositol-3,5-bisphosphate 3-phosphatase activity"/>
    <property type="evidence" value="ECO:0000314"/>
    <property type="project" value="UniProtKB"/>
</dbReference>
<dbReference type="GO" id="GO:0004438">
    <property type="term" value="F:phosphatidylinositol-3-phosphate phosphatase activity"/>
    <property type="evidence" value="ECO:0000314"/>
    <property type="project" value="UniProtKB"/>
</dbReference>
<dbReference type="GO" id="GO:0004721">
    <property type="term" value="F:phosphoprotein phosphatase activity"/>
    <property type="evidence" value="ECO:0000314"/>
    <property type="project" value="UniProtKB"/>
</dbReference>
<dbReference type="GO" id="GO:0000045">
    <property type="term" value="P:autophagosome assembly"/>
    <property type="evidence" value="ECO:0007669"/>
    <property type="project" value="Ensembl"/>
</dbReference>
<dbReference type="GO" id="GO:0008333">
    <property type="term" value="P:endosome to lysosome transport"/>
    <property type="evidence" value="ECO:0000314"/>
    <property type="project" value="UniProtKB"/>
</dbReference>
<dbReference type="GO" id="GO:0045109">
    <property type="term" value="P:intermediate filament organization"/>
    <property type="evidence" value="ECO:0000315"/>
    <property type="project" value="UniProtKB"/>
</dbReference>
<dbReference type="GO" id="GO:0048311">
    <property type="term" value="P:mitochondrion distribution"/>
    <property type="evidence" value="ECO:0000315"/>
    <property type="project" value="UniProtKB"/>
</dbReference>
<dbReference type="GO" id="GO:0007005">
    <property type="term" value="P:mitochondrion organization"/>
    <property type="evidence" value="ECO:0000314"/>
    <property type="project" value="UniProtKB"/>
</dbReference>
<dbReference type="GO" id="GO:0046716">
    <property type="term" value="P:muscle cell cellular homeostasis"/>
    <property type="evidence" value="ECO:0000318"/>
    <property type="project" value="GO_Central"/>
</dbReference>
<dbReference type="GO" id="GO:1902902">
    <property type="term" value="P:negative regulation of autophagosome assembly"/>
    <property type="evidence" value="ECO:0000318"/>
    <property type="project" value="GO_Central"/>
</dbReference>
<dbReference type="GO" id="GO:0051898">
    <property type="term" value="P:negative regulation of phosphatidylinositol 3-kinase/protein kinase B signal transduction"/>
    <property type="evidence" value="ECO:0007669"/>
    <property type="project" value="Ensembl"/>
</dbReference>
<dbReference type="GO" id="GO:0032435">
    <property type="term" value="P:negative regulation of proteasomal ubiquitin-dependent protein catabolic process"/>
    <property type="evidence" value="ECO:0007669"/>
    <property type="project" value="Ensembl"/>
</dbReference>
<dbReference type="GO" id="GO:0032007">
    <property type="term" value="P:negative regulation of TOR signaling"/>
    <property type="evidence" value="ECO:0007669"/>
    <property type="project" value="Ensembl"/>
</dbReference>
<dbReference type="GO" id="GO:0043491">
    <property type="term" value="P:phosphatidylinositol 3-kinase/protein kinase B signal transduction"/>
    <property type="evidence" value="ECO:0007669"/>
    <property type="project" value="Ensembl"/>
</dbReference>
<dbReference type="GO" id="GO:0006661">
    <property type="term" value="P:phosphatidylinositol biosynthetic process"/>
    <property type="evidence" value="ECO:0000304"/>
    <property type="project" value="Reactome"/>
</dbReference>
<dbReference type="GO" id="GO:0046856">
    <property type="term" value="P:phosphatidylinositol dephosphorylation"/>
    <property type="evidence" value="ECO:0000314"/>
    <property type="project" value="UniProtKB"/>
</dbReference>
<dbReference type="GO" id="GO:0048633">
    <property type="term" value="P:positive regulation of skeletal muscle tissue growth"/>
    <property type="evidence" value="ECO:0007669"/>
    <property type="project" value="Ensembl"/>
</dbReference>
<dbReference type="GO" id="GO:0043161">
    <property type="term" value="P:proteasome-mediated ubiquitin-dependent protein catabolic process"/>
    <property type="evidence" value="ECO:0007669"/>
    <property type="project" value="Ensembl"/>
</dbReference>
<dbReference type="GO" id="GO:0006470">
    <property type="term" value="P:protein dephosphorylation"/>
    <property type="evidence" value="ECO:0000314"/>
    <property type="project" value="UniProtKB"/>
</dbReference>
<dbReference type="GO" id="GO:0015031">
    <property type="term" value="P:protein transport"/>
    <property type="evidence" value="ECO:0007669"/>
    <property type="project" value="UniProtKB-KW"/>
</dbReference>
<dbReference type="GO" id="GO:0044088">
    <property type="term" value="P:regulation of vacuole organization"/>
    <property type="evidence" value="ECO:0000314"/>
    <property type="project" value="UniProtKB"/>
</dbReference>
<dbReference type="GO" id="GO:0048630">
    <property type="term" value="P:skeletal muscle tissue growth"/>
    <property type="evidence" value="ECO:0007669"/>
    <property type="project" value="Ensembl"/>
</dbReference>
<dbReference type="GO" id="GO:0031929">
    <property type="term" value="P:TOR signaling"/>
    <property type="evidence" value="ECO:0007669"/>
    <property type="project" value="Ensembl"/>
</dbReference>
<dbReference type="CDD" id="cd13355">
    <property type="entry name" value="PH-GRAM_MTM1"/>
    <property type="match status" value="1"/>
</dbReference>
<dbReference type="CDD" id="cd14591">
    <property type="entry name" value="PTP-MTM1"/>
    <property type="match status" value="1"/>
</dbReference>
<dbReference type="FunFam" id="2.30.29.30:FF:000038">
    <property type="entry name" value="Myotubularin 1, isoform CRA_a"/>
    <property type="match status" value="1"/>
</dbReference>
<dbReference type="Gene3D" id="2.30.29.30">
    <property type="entry name" value="Pleckstrin-homology domain (PH domain)/Phosphotyrosine-binding domain (PTB)"/>
    <property type="match status" value="1"/>
</dbReference>
<dbReference type="InterPro" id="IPR004182">
    <property type="entry name" value="GRAM"/>
</dbReference>
<dbReference type="InterPro" id="IPR030564">
    <property type="entry name" value="Myotubularin"/>
</dbReference>
<dbReference type="InterPro" id="IPR010569">
    <property type="entry name" value="Myotubularin-like_Pase_dom"/>
</dbReference>
<dbReference type="InterPro" id="IPR011993">
    <property type="entry name" value="PH-like_dom_sf"/>
</dbReference>
<dbReference type="InterPro" id="IPR029021">
    <property type="entry name" value="Prot-tyrosine_phosphatase-like"/>
</dbReference>
<dbReference type="InterPro" id="IPR016130">
    <property type="entry name" value="Tyr_Pase_AS"/>
</dbReference>
<dbReference type="InterPro" id="IPR003595">
    <property type="entry name" value="Tyr_Pase_cat"/>
</dbReference>
<dbReference type="InterPro" id="IPR000387">
    <property type="entry name" value="Tyr_Pase_dom"/>
</dbReference>
<dbReference type="PANTHER" id="PTHR10807:SF69">
    <property type="entry name" value="MYOTUBULARIN"/>
    <property type="match status" value="1"/>
</dbReference>
<dbReference type="PANTHER" id="PTHR10807">
    <property type="entry name" value="MYOTUBULARIN-RELATED"/>
    <property type="match status" value="1"/>
</dbReference>
<dbReference type="Pfam" id="PF02893">
    <property type="entry name" value="GRAM"/>
    <property type="match status" value="1"/>
</dbReference>
<dbReference type="Pfam" id="PF06602">
    <property type="entry name" value="Myotub-related"/>
    <property type="match status" value="1"/>
</dbReference>
<dbReference type="SMART" id="SM00568">
    <property type="entry name" value="GRAM"/>
    <property type="match status" value="1"/>
</dbReference>
<dbReference type="SMART" id="SM00404">
    <property type="entry name" value="PTPc_motif"/>
    <property type="match status" value="1"/>
</dbReference>
<dbReference type="SUPFAM" id="SSF52799">
    <property type="entry name" value="(Phosphotyrosine protein) phosphatases II"/>
    <property type="match status" value="1"/>
</dbReference>
<dbReference type="SUPFAM" id="SSF50729">
    <property type="entry name" value="PH domain-like"/>
    <property type="match status" value="1"/>
</dbReference>
<dbReference type="PROSITE" id="PS51339">
    <property type="entry name" value="PPASE_MYOTUBULARIN"/>
    <property type="match status" value="1"/>
</dbReference>
<dbReference type="PROSITE" id="PS00383">
    <property type="entry name" value="TYR_PHOSPHATASE_1"/>
    <property type="match status" value="1"/>
</dbReference>
<dbReference type="PROSITE" id="PS50056">
    <property type="entry name" value="TYR_PHOSPHATASE_2"/>
    <property type="match status" value="1"/>
</dbReference>
<evidence type="ECO:0000250" key="1">
    <source>
        <dbReference type="UniProtKB" id="Q13614"/>
    </source>
</evidence>
<evidence type="ECO:0000250" key="2">
    <source>
        <dbReference type="UniProtKB" id="Q9Z2C5"/>
    </source>
</evidence>
<evidence type="ECO:0000255" key="3">
    <source>
        <dbReference type="PROSITE-ProRule" id="PRU00669"/>
    </source>
</evidence>
<evidence type="ECO:0000255" key="4">
    <source>
        <dbReference type="PROSITE-ProRule" id="PRU10044"/>
    </source>
</evidence>
<evidence type="ECO:0000256" key="5">
    <source>
        <dbReference type="SAM" id="MobiDB-lite"/>
    </source>
</evidence>
<evidence type="ECO:0000269" key="6">
    <source>
    </source>
</evidence>
<evidence type="ECO:0000269" key="7">
    <source>
    </source>
</evidence>
<evidence type="ECO:0000269" key="8">
    <source>
    </source>
</evidence>
<evidence type="ECO:0000269" key="9">
    <source>
    </source>
</evidence>
<evidence type="ECO:0000269" key="10">
    <source>
    </source>
</evidence>
<evidence type="ECO:0000269" key="11">
    <source>
    </source>
</evidence>
<evidence type="ECO:0000269" key="12">
    <source>
    </source>
</evidence>
<evidence type="ECO:0000269" key="13">
    <source>
    </source>
</evidence>
<evidence type="ECO:0000269" key="14">
    <source>
    </source>
</evidence>
<evidence type="ECO:0000269" key="15">
    <source>
    </source>
</evidence>
<evidence type="ECO:0000269" key="16">
    <source>
    </source>
</evidence>
<evidence type="ECO:0000269" key="17">
    <source>
    </source>
</evidence>
<evidence type="ECO:0000269" key="18">
    <source>
    </source>
</evidence>
<evidence type="ECO:0000269" key="19">
    <source>
    </source>
</evidence>
<evidence type="ECO:0000269" key="20">
    <source>
    </source>
</evidence>
<evidence type="ECO:0000269" key="21">
    <source>
    </source>
</evidence>
<evidence type="ECO:0000269" key="22">
    <source>
    </source>
</evidence>
<evidence type="ECO:0000269" key="23">
    <source>
    </source>
</evidence>
<evidence type="ECO:0000269" key="24">
    <source>
    </source>
</evidence>
<evidence type="ECO:0000269" key="25">
    <source>
    </source>
</evidence>
<evidence type="ECO:0000269" key="26">
    <source>
    </source>
</evidence>
<evidence type="ECO:0000269" key="27">
    <source>
    </source>
</evidence>
<evidence type="ECO:0000269" key="28">
    <source>
    </source>
</evidence>
<evidence type="ECO:0000303" key="29">
    <source>
    </source>
</evidence>
<evidence type="ECO:0000303" key="30">
    <source>
    </source>
</evidence>
<evidence type="ECO:0000305" key="31"/>
<evidence type="ECO:0000305" key="32">
    <source>
    </source>
</evidence>
<evidence type="ECO:0000305" key="33">
    <source>
    </source>
</evidence>
<evidence type="ECO:0000312" key="34">
    <source>
        <dbReference type="HGNC" id="HGNC:7448"/>
    </source>
</evidence>
<evidence type="ECO:0007744" key="35">
    <source>
    </source>
</evidence>
<evidence type="ECO:0007744" key="36">
    <source>
    </source>
</evidence>
<evidence type="ECO:0007744" key="37">
    <source>
    </source>
</evidence>
<evidence type="ECO:0007744" key="38">
    <source>
    </source>
</evidence>
<feature type="chain" id="PRO_0000094930" description="Myotubularin">
    <location>
        <begin position="1"/>
        <end position="603"/>
    </location>
</feature>
<feature type="domain" description="GRAM">
    <location>
        <begin position="29"/>
        <end position="97"/>
    </location>
</feature>
<feature type="domain" description="Myotubularin phosphatase" evidence="3">
    <location>
        <begin position="163"/>
        <end position="538"/>
    </location>
</feature>
<feature type="region of interest" description="Disordered" evidence="5">
    <location>
        <begin position="1"/>
        <end position="25"/>
    </location>
</feature>
<feature type="region of interest" description="Disordered" evidence="5">
    <location>
        <begin position="579"/>
        <end position="603"/>
    </location>
</feature>
<feature type="compositionally biased region" description="Polar residues" evidence="5">
    <location>
        <begin position="1"/>
        <end position="13"/>
    </location>
</feature>
<feature type="compositionally biased region" description="Basic and acidic residues" evidence="5">
    <location>
        <begin position="14"/>
        <end position="25"/>
    </location>
</feature>
<feature type="active site" description="Phosphocysteine intermediate" evidence="4">
    <location>
        <position position="375"/>
    </location>
</feature>
<feature type="binding site" evidence="1">
    <location>
        <position position="288"/>
    </location>
    <ligand>
        <name>a 1,2-diacyl-sn-glycero-3-phospho-(1D-myo-inositol-3,5-bisphosphate)</name>
        <dbReference type="ChEBI" id="CHEBI:57923"/>
    </ligand>
</feature>
<feature type="binding site" evidence="1">
    <location>
        <position position="288"/>
    </location>
    <ligand>
        <name>a 1,2-diacyl-sn-glycero-3-phospho-(1D-myo-inositol-3-phosphate)</name>
        <dbReference type="ChEBI" id="CHEBI:58088"/>
    </ligand>
</feature>
<feature type="binding site" evidence="1">
    <location>
        <position position="313"/>
    </location>
    <ligand>
        <name>a 1,2-diacyl-sn-glycero-3-phospho-(1D-myo-inositol-3,5-bisphosphate)</name>
        <dbReference type="ChEBI" id="CHEBI:57923"/>
    </ligand>
</feature>
<feature type="binding site" evidence="1">
    <location>
        <position position="313"/>
    </location>
    <ligand>
        <name>a 1,2-diacyl-sn-glycero-3-phospho-(1D-myo-inositol-3-phosphate)</name>
        <dbReference type="ChEBI" id="CHEBI:58088"/>
    </ligand>
</feature>
<feature type="binding site" evidence="1">
    <location>
        <position position="314"/>
    </location>
    <ligand>
        <name>a 1,2-diacyl-sn-glycero-3-phospho-(1D-myo-inositol-3,5-bisphosphate)</name>
        <dbReference type="ChEBI" id="CHEBI:57923"/>
    </ligand>
</feature>
<feature type="binding site" evidence="1">
    <location>
        <position position="314"/>
    </location>
    <ligand>
        <name>a 1,2-diacyl-sn-glycero-3-phospho-(1D-myo-inositol-3-phosphate)</name>
        <dbReference type="ChEBI" id="CHEBI:58088"/>
    </ligand>
</feature>
<feature type="binding site" evidence="1">
    <location>
        <position position="376"/>
    </location>
    <ligand>
        <name>a 1,2-diacyl-sn-glycero-3-phospho-(1D-myo-inositol-3,5-bisphosphate)</name>
        <dbReference type="ChEBI" id="CHEBI:57923"/>
    </ligand>
</feature>
<feature type="binding site" evidence="1">
    <location>
        <position position="376"/>
    </location>
    <ligand>
        <name>a 1,2-diacyl-sn-glycero-3-phospho-(1D-myo-inositol-3-phosphate)</name>
        <dbReference type="ChEBI" id="CHEBI:58088"/>
    </ligand>
</feature>
<feature type="binding site" evidence="1">
    <location>
        <position position="377"/>
    </location>
    <ligand>
        <name>a 1,2-diacyl-sn-glycero-3-phospho-(1D-myo-inositol-3,5-bisphosphate)</name>
        <dbReference type="ChEBI" id="CHEBI:57923"/>
    </ligand>
</feature>
<feature type="binding site" evidence="1">
    <location>
        <position position="377"/>
    </location>
    <ligand>
        <name>a 1,2-diacyl-sn-glycero-3-phospho-(1D-myo-inositol-3-phosphate)</name>
        <dbReference type="ChEBI" id="CHEBI:58088"/>
    </ligand>
</feature>
<feature type="binding site" evidence="1">
    <location>
        <position position="378"/>
    </location>
    <ligand>
        <name>a 1,2-diacyl-sn-glycero-3-phospho-(1D-myo-inositol-3,5-bisphosphate)</name>
        <dbReference type="ChEBI" id="CHEBI:57923"/>
    </ligand>
</feature>
<feature type="binding site" evidence="1">
    <location>
        <position position="378"/>
    </location>
    <ligand>
        <name>a 1,2-diacyl-sn-glycero-3-phospho-(1D-myo-inositol-3-phosphate)</name>
        <dbReference type="ChEBI" id="CHEBI:58088"/>
    </ligand>
</feature>
<feature type="binding site" evidence="1">
    <location>
        <position position="379"/>
    </location>
    <ligand>
        <name>a 1,2-diacyl-sn-glycero-3-phospho-(1D-myo-inositol-3,5-bisphosphate)</name>
        <dbReference type="ChEBI" id="CHEBI:57923"/>
    </ligand>
</feature>
<feature type="binding site" evidence="1">
    <location>
        <position position="379"/>
    </location>
    <ligand>
        <name>a 1,2-diacyl-sn-glycero-3-phospho-(1D-myo-inositol-3-phosphate)</name>
        <dbReference type="ChEBI" id="CHEBI:58088"/>
    </ligand>
</feature>
<feature type="binding site" evidence="1">
    <location>
        <position position="380"/>
    </location>
    <ligand>
        <name>a 1,2-diacyl-sn-glycero-3-phospho-(1D-myo-inositol-3,5-bisphosphate)</name>
        <dbReference type="ChEBI" id="CHEBI:57923"/>
    </ligand>
</feature>
<feature type="binding site" evidence="1">
    <location>
        <position position="380"/>
    </location>
    <ligand>
        <name>a 1,2-diacyl-sn-glycero-3-phospho-(1D-myo-inositol-3-phosphate)</name>
        <dbReference type="ChEBI" id="CHEBI:58088"/>
    </ligand>
</feature>
<feature type="binding site" evidence="1">
    <location>
        <position position="381"/>
    </location>
    <ligand>
        <name>a 1,2-diacyl-sn-glycero-3-phospho-(1D-myo-inositol-3,5-bisphosphate)</name>
        <dbReference type="ChEBI" id="CHEBI:57923"/>
    </ligand>
</feature>
<feature type="binding site" evidence="1">
    <location>
        <position position="381"/>
    </location>
    <ligand>
        <name>a 1,2-diacyl-sn-glycero-3-phospho-(1D-myo-inositol-3-phosphate)</name>
        <dbReference type="ChEBI" id="CHEBI:58088"/>
    </ligand>
</feature>
<feature type="binding site" evidence="1">
    <location>
        <position position="417"/>
    </location>
    <ligand>
        <name>a 1,2-diacyl-sn-glycero-3-phospho-(1D-myo-inositol-3,5-bisphosphate)</name>
        <dbReference type="ChEBI" id="CHEBI:57923"/>
    </ligand>
</feature>
<feature type="binding site" evidence="1">
    <location>
        <position position="421"/>
    </location>
    <ligand>
        <name>a 1,2-diacyl-sn-glycero-3-phospho-(1D-myo-inositol-3,5-bisphosphate)</name>
        <dbReference type="ChEBI" id="CHEBI:57923"/>
    </ligand>
</feature>
<feature type="binding site" evidence="1">
    <location>
        <position position="421"/>
    </location>
    <ligand>
        <name>a 1,2-diacyl-sn-glycero-3-phospho-(1D-myo-inositol-3-phosphate)</name>
        <dbReference type="ChEBI" id="CHEBI:58088"/>
    </ligand>
</feature>
<feature type="modified residue" description="Phosphoserine" evidence="38">
    <location>
        <position position="13"/>
    </location>
</feature>
<feature type="modified residue" description="Phosphoserine" evidence="38">
    <location>
        <position position="18"/>
    </location>
</feature>
<feature type="modified residue" description="Phosphothreonine" evidence="35">
    <location>
        <position position="495"/>
    </location>
</feature>
<feature type="modified residue" description="Phosphoserine" evidence="36 37">
    <location>
        <position position="588"/>
    </location>
</feature>
<feature type="splice variant" id="VSP_056208" description="In isoform 2." evidence="29">
    <location>
        <begin position="78"/>
        <end position="114"/>
    </location>
</feature>
<feature type="sequence variant" id="VAR_006386" description="In CNMX; dbSNP:rs587783788." evidence="15">
    <location>
        <position position="47"/>
    </location>
</feature>
<feature type="sequence variant" id="VAR_018227" description="In CNMX; greatly reduced binding to PI(3,5)P2; abolishes interaction with MTMR12; does not translocate to the late endosome following EGF stimulation; shows normal EGFR degradation; dbSNP:rs587783796." evidence="12 19 23">
    <original>V</original>
    <variation>F</variation>
    <location>
        <position position="49"/>
    </location>
</feature>
<feature type="sequence variant" id="VAR_018228" description="In CNMX." evidence="15">
    <original>Y</original>
    <variation>D</variation>
    <location>
        <position position="68"/>
    </location>
</feature>
<feature type="sequence variant" id="VAR_006387" description="In CNMX; mild; reduced response to PI5P and reduced binding to PI(3,5)P2; abolishes interaction with MTMR12; dbSNP:rs132630304." evidence="12 16 19 23 25 26">
    <original>R</original>
    <variation>C</variation>
    <location>
        <position position="69"/>
    </location>
</feature>
<feature type="sequence variant" id="VAR_018229" description="In CNMX." evidence="15">
    <original>R</original>
    <variation>P</variation>
    <location>
        <position position="69"/>
    </location>
</feature>
<feature type="sequence variant" id="VAR_018230" description="In CNMX; severe." evidence="15">
    <original>R</original>
    <variation>S</variation>
    <location>
        <position position="69"/>
    </location>
</feature>
<feature type="sequence variant" id="VAR_006388" description="In CNMX; mild; reduced binding to PI(3,5)P2; dbSNP:rs587783809." evidence="15 19 26">
    <original>L</original>
    <variation>F</variation>
    <location>
        <position position="70"/>
    </location>
</feature>
<feature type="sequence variant" id="VAR_006389" description="In CNMX; mild; reduced binding to PI(3,5)P2; dbSNP:rs587783816." evidence="19 26">
    <original>L</original>
    <variation>P</variation>
    <location>
        <position position="87"/>
    </location>
</feature>
<feature type="sequence variant" id="VAR_018231" description="In CNMX; dbSNP:rs132630307." evidence="18">
    <original>E</original>
    <variation>K</variation>
    <location>
        <position position="157"/>
    </location>
</feature>
<feature type="sequence variant" id="VAR_009217" description="In CNMX; mild; dbSNP:rs587783832." evidence="8 12">
    <original>P</original>
    <variation>S</variation>
    <location>
        <position position="179"/>
    </location>
</feature>
<feature type="sequence variant" id="VAR_018232" description="In CNMX; very mild." evidence="15">
    <original>N</original>
    <variation>K</variation>
    <location>
        <position position="180"/>
    </location>
</feature>
<feature type="sequence variant" id="VAR_006390" description="In CNMX; severe; loss of activity; abolishes interaction with DES and MTMR12; dbSNP:rs587783835." evidence="16 22 23 25">
    <original>R</original>
    <variation>G</variation>
    <location>
        <position position="184"/>
    </location>
</feature>
<feature type="sequence variant" id="VAR_018233" description="In CNMX." evidence="15">
    <original>R</original>
    <variation>L</variation>
    <location>
        <position position="184"/>
    </location>
</feature>
<feature type="sequence variant" id="VAR_018234" description="In CNMX; dbSNP:rs587783836." evidence="12">
    <original>T</original>
    <variation>I</variation>
    <location>
        <position position="186"/>
    </location>
</feature>
<feature type="sequence variant" id="VAR_006391" description="In CNMX; dbSNP:rs132630302." evidence="26">
    <original>N</original>
    <variation>S</variation>
    <location>
        <position position="189"/>
    </location>
</feature>
<feature type="sequence variant" id="VAR_018235" description="In CNMX." evidence="13">
    <original>T</original>
    <variation>I</variation>
    <location>
        <position position="197"/>
    </location>
</feature>
<feature type="sequence variant" id="VAR_006392" description="In CNMX; severe." evidence="25">
    <original>Y</original>
    <variation>N</variation>
    <location>
        <position position="198"/>
    </location>
</feature>
<feature type="sequence variant" id="VAR_018236" description="In CNMX." evidence="13">
    <original>P</original>
    <variation>S</variation>
    <location>
        <position position="199"/>
    </location>
</feature>
<feature type="sequence variant" id="VAR_018237" description="In CNMX; severe." evidence="15">
    <original>L</original>
    <variation>S</variation>
    <location>
        <position position="202"/>
    </location>
</feature>
<feature type="sequence variant" id="VAR_006393" description="In CNMX; severe; dramatic decrease in phosphatase activity; abolishes interaction with DES and MTMR12; dbSNP:rs587783841." evidence="6 10 12 15 22 23 26">
    <original>P</original>
    <variation>L</variation>
    <location>
        <position position="205"/>
    </location>
</feature>
<feature type="sequence variant" id="VAR_009218" description="In CNMX; mild." evidence="6 8">
    <original>I</original>
    <variation>T</variation>
    <location>
        <position position="225"/>
    </location>
</feature>
<feature type="sequence variant" id="VAR_018238" description="In CNMX; dbSNP:rs587783848." evidence="15">
    <original>P</original>
    <variation>T</variation>
    <location>
        <position position="226"/>
    </location>
</feature>
<feature type="sequence variant" id="VAR_018239" description="In CNMX; dbSNP:rs587783850." evidence="12">
    <original>V</original>
    <variation>M</variation>
    <location>
        <position position="227"/>
    </location>
</feature>
<feature type="sequence variant" id="VAR_018240" description="In CNMX; dbSNP:rs587783851." evidence="12">
    <original>L</original>
    <variation>P</variation>
    <location>
        <position position="228"/>
    </location>
</feature>
<feature type="sequence variant" id="VAR_006394" description="In CNMX; mild." evidence="26">
    <original>S</original>
    <variation>P</variation>
    <location>
        <position position="229"/>
    </location>
</feature>
<feature type="sequence variant" id="VAR_018241" description="In CNMX." evidence="6 15">
    <original>W</original>
    <variation>C</variation>
    <location>
        <position position="230"/>
    </location>
</feature>
<feature type="sequence variant" id="VAR_018242" description="In CNMX." evidence="6">
    <original>H</original>
    <variation>R</variation>
    <location>
        <position position="232"/>
    </location>
</feature>
<feature type="sequence variant" id="VAR_006395" description="In CNMX; mild to moderate; abolishes interaction with DES, but not with MTMR12; reduces MTMR12 protein levels in myotubes; dbSNP:rs132630305." evidence="6 8 12 15 22 23 26">
    <original>R</original>
    <variation>C</variation>
    <location>
        <position position="241"/>
    </location>
</feature>
<feature type="sequence variant" id="VAR_006396" description="In CNMX; severe; loss of activity." evidence="10 16 25">
    <original>R</original>
    <variation>L</variation>
    <location>
        <position position="241"/>
    </location>
</feature>
<feature type="sequence variant" id="VAR_009219" description="In CNMX; severe; dbSNP:rs587783856." evidence="8">
    <original>I</original>
    <variation>S</variation>
    <location>
        <position position="264"/>
    </location>
</feature>
<feature type="sequence variant" id="VAR_018243" description="In CNMX." evidence="12">
    <original>A</original>
    <variation>G</variation>
    <location>
        <position position="279"/>
    </location>
</feature>
<feature type="sequence variant" id="VAR_009220" description="In CNMX; mild." evidence="8">
    <location>
        <position position="294"/>
    </location>
</feature>
<feature type="sequence variant" id="VAR_006397" description="In CNMX; mild." evidence="25">
    <original>M</original>
    <variation>R</variation>
    <location>
        <position position="317"/>
    </location>
</feature>
<feature type="sequence variant" id="VAR_018244" description="In CNMX; mild." evidence="15">
    <original>W</original>
    <variation>C</variation>
    <location>
        <position position="346"/>
    </location>
</feature>
<feature type="sequence variant" id="VAR_018245" description="In CNMX." evidence="9">
    <original>W</original>
    <variation>S</variation>
    <location>
        <position position="346"/>
    </location>
</feature>
<feature type="sequence variant" id="VAR_018246" description="In CNMX." evidence="15">
    <original>V</original>
    <variation>G</variation>
    <location>
        <position position="364"/>
    </location>
</feature>
<feature type="sequence variant" id="VAR_018247" description="In CNMX; dbSNP:rs587783754." evidence="9">
    <original>H</original>
    <variation>D</variation>
    <location>
        <position position="374"/>
    </location>
</feature>
<feature type="sequence variant" id="VAR_006398" description="In CNMX; dramatic decrease in phosphatase activity." evidence="10 26">
    <original>S</original>
    <variation>N</variation>
    <location>
        <position position="376"/>
    </location>
</feature>
<feature type="sequence variant" id="VAR_018248" description="In CNMX." evidence="7">
    <original>G</original>
    <variation>E</variation>
    <location>
        <position position="378"/>
    </location>
</feature>
<feature type="sequence variant" id="VAR_006399" description="In CNMX; severe; dramatic decrease in phosphatase activity; does not affect EGFR degradation; dbSNP:rs587783755." evidence="8 10 12 13 26">
    <original>G</original>
    <variation>R</variation>
    <location>
        <position position="378"/>
    </location>
</feature>
<feature type="sequence variant" id="VAR_068846" description="In CNMX; dbSNP:rs587783759." evidence="21">
    <original>S</original>
    <variation>Y</variation>
    <location>
        <position position="387"/>
    </location>
</feature>
<feature type="sequence variant" id="VAR_018249" description="In CNMX; severe." evidence="15">
    <original>A</original>
    <variation>D</variation>
    <location>
        <position position="389"/>
    </location>
</feature>
<feature type="sequence variant" id="VAR_018250" description="In CNMX." evidence="12">
    <original>L</original>
    <variation>P</variation>
    <location>
        <position position="391"/>
    </location>
</feature>
<feature type="sequence variant" id="VAR_006400" description="In CNMX; severe; dramatic decrease in phosphatase activity; dbSNP:rs132630303." evidence="10 12 15 25 26">
    <original>Y</original>
    <variation>C</variation>
    <location>
        <position position="397"/>
    </location>
</feature>
<feature type="sequence variant" id="VAR_006401" description="In CNMX; mild; dbSNP:rs587783762." evidence="26">
    <original>G</original>
    <variation>A</variation>
    <location>
        <position position="402"/>
    </location>
</feature>
<feature type="sequence variant" id="VAR_018251" description="In CNMX; dbSNP:rs1569565525." evidence="6 12 13">
    <original>G</original>
    <variation>R</variation>
    <location>
        <position position="402"/>
    </location>
</feature>
<feature type="sequence variant" id="VAR_018252" description="In CNMX." evidence="28">
    <original>G</original>
    <variation>V</variation>
    <location>
        <position position="402"/>
    </location>
</feature>
<feature type="sequence variant" id="VAR_006402" description="In CNMX; mild; dbSNP:rs781933660." evidence="20 25">
    <original>E</original>
    <variation>K</variation>
    <location>
        <position position="404"/>
    </location>
</feature>
<feature type="sequence variant" id="VAR_006403" description="In CNMX; severe." evidence="25">
    <original>L</original>
    <variation>P</variation>
    <location>
        <position position="406"/>
    </location>
</feature>
<feature type="sequence variant" id="VAR_018253" description="In CNMX; dbSNP:rs587783764." evidence="9">
    <original>W</original>
    <variation>C</variation>
    <location>
        <position position="411"/>
    </location>
</feature>
<feature type="sequence variant" id="VAR_009221" description="In CNMX; severe.">
    <original>S</original>
    <variation>SFIQ</variation>
    <location>
        <position position="420"/>
    </location>
</feature>
<feature type="sequence variant" id="VAR_006404" description="In CNMX; severe; reduced activity and response to PI5P; does not affect interaction with DES or MTMR12; dbSNP:rs587783772." evidence="12 15 16 22 23 25 26">
    <original>R</original>
    <variation>Q</variation>
    <location>
        <position position="421"/>
    </location>
</feature>
<feature type="sequence variant" id="VAR_006405" description="In CNMX; severe.">
    <original>R</original>
    <variation>RFIQ</variation>
    <location>
        <position position="421"/>
    </location>
</feature>
<feature type="sequence variant" id="VAR_006406" description="In CNMX; dbSNP:rs886044782." evidence="26">
    <original>D</original>
    <variation>N</variation>
    <location>
        <position position="431"/>
    </location>
</feature>
<feature type="sequence variant" id="VAR_006407" description="In CNMX; dbSNP:rs886044783." evidence="26">
    <original>D</original>
    <variation>N</variation>
    <location>
        <position position="433"/>
    </location>
</feature>
<feature type="sequence variant" id="VAR_018254" description="In CNMX." evidence="6">
    <original>C</original>
    <variation>Y</variation>
    <location>
        <position position="444"/>
    </location>
</feature>
<feature type="sequence variant" id="VAR_006408" description="In CNMX; dbSNP:rs587783789." evidence="15 26">
    <original>H</original>
    <variation>P</variation>
    <location>
        <position position="469"/>
    </location>
</feature>
<feature type="sequence variant" id="VAR_018255" description="In CNMX; severe." evidence="15">
    <original>L</original>
    <variation>P</variation>
    <location>
        <position position="470"/>
    </location>
</feature>
<feature type="sequence variant" id="VAR_018256" description="In CNMX; mild." evidence="15">
    <original>N</original>
    <variation>Y</variation>
    <location>
        <position position="481"/>
    </location>
</feature>
<feature type="sequence variant" id="VAR_006409" description="In CNMX; mild; dbSNP:rs587783801." evidence="25">
    <original>W</original>
    <variation>R</variation>
    <location>
        <position position="499"/>
    </location>
</feature>
<feature type="sequence variant" id="VAR_009222" description="In CNMX; severe." evidence="8">
    <original>K</original>
    <variation>N</variation>
    <location>
        <position position="510"/>
    </location>
</feature>
<feature type="mutagenesis site" description="Reduced response to PI5P." evidence="16">
    <original>K</original>
    <variation>A</variation>
    <location>
        <position position="114"/>
    </location>
</feature>
<feature type="mutagenesis site" description="Disrupts interaction with DES. Does not affect lipid phosphatase activity." evidence="22">
    <original>H</original>
    <variation>A</variation>
    <location>
        <position position="181"/>
    </location>
</feature>
<feature type="mutagenesis site" description="Disrupts interaction with DES. Does not affect lipid phosphatase activity." evidence="22">
    <original>Y</original>
    <variation>A</variation>
    <location>
        <position position="206"/>
    </location>
</feature>
<feature type="mutagenesis site" description="Disrupts interaction with DES. Does not affect lipid phosphatase activity." evidence="22">
    <original>S</original>
    <variation>A</variation>
    <location>
        <position position="209"/>
    </location>
</feature>
<feature type="mutagenesis site" description="Loss of activity." evidence="16">
    <original>R</original>
    <variation>A</variation>
    <location>
        <position position="220"/>
    </location>
</feature>
<feature type="mutagenesis site" description="Disrupts interaction with DES." evidence="22">
    <original>K</original>
    <variation>A</variation>
    <location>
        <position position="255"/>
    </location>
</feature>
<feature type="mutagenesis site" description="No effect on subcellular location." evidence="14">
    <original>D</original>
    <variation>A</variation>
    <location>
        <position position="257"/>
    </location>
</feature>
<feature type="mutagenesis site" description="Disrupts interaction with DES. Does not affect lipid phosphatase activity." evidence="22">
    <original>K</original>
    <variation>A</variation>
    <location>
        <position position="269"/>
    </location>
</feature>
<feature type="mutagenesis site" description="Localizes to plasma membrane extensions. Does not affect interaction with DES." evidence="11 14 22">
    <original>D</original>
    <variation>A</variation>
    <location>
        <position position="278"/>
    </location>
</feature>
<feature type="mutagenesis site" description="No effect on subcellular location." evidence="10 11 14 16 22">
    <original>C</original>
    <variation>A</variation>
    <location>
        <position position="375"/>
    </location>
</feature>
<feature type="mutagenesis site" description="Lacks activity toward PI3P. Does not affect interaction with DES or MTMR12." evidence="10 11 14 16 22 23">
    <original>C</original>
    <variation>S</variation>
    <location>
        <position position="375"/>
    </location>
</feature>
<feature type="mutagenesis site" description="No effect on subcellular location." evidence="11 14">
    <original>D</original>
    <variation>A</variation>
    <location>
        <position position="377"/>
    </location>
</feature>
<feature type="mutagenesis site" description="Does not affect interaction with DES." evidence="11 14 22">
    <original>D</original>
    <variation>A</variation>
    <location>
        <position position="380"/>
    </location>
</feature>
<feature type="mutagenesis site" description="Produces an unstable protein." evidence="11">
    <original>D</original>
    <variation>A</variation>
    <location>
        <position position="394"/>
    </location>
</feature>
<feature type="mutagenesis site" description="Produces an unstable protein." evidence="11">
    <original>E</original>
    <variation>A</variation>
    <location>
        <position position="410"/>
    </location>
</feature>
<feature type="mutagenesis site" description="Does not affect interaction with DES." evidence="22">
    <original>S</original>
    <variation>D</variation>
    <location>
        <position position="420"/>
    </location>
</feature>
<feature type="mutagenesis site" description="Produces an unstable protein." evidence="11">
    <original>D</original>
    <variation>A</variation>
    <location>
        <position position="443"/>
    </location>
</feature>
<feature type="mutagenesis site" description="Reduces MTMR12 protein levels in myotubes." evidence="23">
    <location>
        <begin position="474"/>
        <end position="603"/>
    </location>
</feature>
<feature type="sequence conflict" description="In Ref. 6; AAH30779." evidence="31" ref="6">
    <original>E</original>
    <variation>K</variation>
    <location>
        <position position="410"/>
    </location>
</feature>
<keyword id="KW-0025">Alternative splicing</keyword>
<keyword id="KW-1003">Cell membrane</keyword>
<keyword id="KW-0966">Cell projection</keyword>
<keyword id="KW-0963">Cytoplasm</keyword>
<keyword id="KW-0225">Disease variant</keyword>
<keyword id="KW-0967">Endosome</keyword>
<keyword id="KW-0378">Hydrolase</keyword>
<keyword id="KW-0443">Lipid metabolism</keyword>
<keyword id="KW-0472">Membrane</keyword>
<keyword id="KW-0597">Phosphoprotein</keyword>
<keyword id="KW-0904">Protein phosphatase</keyword>
<keyword id="KW-0653">Protein transport</keyword>
<keyword id="KW-1267">Proteomics identification</keyword>
<keyword id="KW-1185">Reference proteome</keyword>
<keyword id="KW-0813">Transport</keyword>
<gene>
    <name evidence="34" type="primary">MTM1</name>
    <name type="synonym">CG2</name>
</gene>
<comment type="function">
    <text evidence="10 11 16 19 22 23 27">Lipid phosphatase which dephosphorylates phosphatidylinositol 3-monophosphate (PI3P) and phosphatidylinositol 3,5-bisphosphate (PI(3,5)P2) (PubMed:10900271, PubMed:11001925, PubMed:12646134, PubMed:14722070). Has also been shown to dephosphorylate phosphotyrosine- and phosphoserine-containing peptides (PubMed:9537414). Negatively regulates EGFR degradation through regulation of EGFR trafficking from the late endosome to the lysosome (PubMed:14722070). Plays a role in vacuolar formation and morphology. Regulates desmin intermediate filament assembly and architecture (PubMed:21135508). Plays a role in mitochondrial morphology and positioning (PubMed:21135508). Required for skeletal muscle maintenance but not for myogenesis (PubMed:21135508). In skeletal muscles, stabilizes MTMR12 protein levels (PubMed:23818870).</text>
</comment>
<comment type="catalytic activity">
    <reaction evidence="10 11 16 17 19">
        <text>a 1,2-diacyl-sn-glycero-3-phospho-(1D-myo-inositol-3-phosphate) + H2O = a 1,2-diacyl-sn-glycero-3-phospho-(1D-myo-inositol) + phosphate</text>
        <dbReference type="Rhea" id="RHEA:12316"/>
        <dbReference type="ChEBI" id="CHEBI:15377"/>
        <dbReference type="ChEBI" id="CHEBI:43474"/>
        <dbReference type="ChEBI" id="CHEBI:57880"/>
        <dbReference type="ChEBI" id="CHEBI:58088"/>
    </reaction>
</comment>
<comment type="catalytic activity">
    <reaction evidence="16 19">
        <text>a 1,2-diacyl-sn-glycero-3-phospho-(1D-myo-inositol-3,5-bisphosphate) + H2O = a 1,2-diacyl-sn-glycero-3-phospho-(1D-myo-inositol-5-phosphate) + phosphate</text>
        <dbReference type="Rhea" id="RHEA:39019"/>
        <dbReference type="ChEBI" id="CHEBI:15377"/>
        <dbReference type="ChEBI" id="CHEBI:43474"/>
        <dbReference type="ChEBI" id="CHEBI:57795"/>
        <dbReference type="ChEBI" id="CHEBI:57923"/>
        <dbReference type="EC" id="3.1.3.95"/>
    </reaction>
</comment>
<comment type="catalytic activity">
    <reaction evidence="16">
        <text>1,2-dioctanoyl-sn-glycero-3-phospho-(1-D-myo-inositol-3-phosphate) + H2O = 1,2-dioctanoyl-sn-glycero-3-phospho-(1D-myo-inositol) + phosphate</text>
        <dbReference type="Rhea" id="RHEA:42328"/>
        <dbReference type="ChEBI" id="CHEBI:15377"/>
        <dbReference type="ChEBI" id="CHEBI:43474"/>
        <dbReference type="ChEBI" id="CHEBI:65221"/>
        <dbReference type="ChEBI" id="CHEBI:78934"/>
    </reaction>
</comment>
<comment type="catalytic activity">
    <reaction evidence="16">
        <text>1,2-dioctanoyl-sn-glycero-3-phospho-(1D-myo-inositol-3,5-bisphosphate) + H2O = 1,2-dioctanoyl-sn-glycero-3-phospho-(1D-myo-inositol-5-phosphate) + phosphate</text>
        <dbReference type="Rhea" id="RHEA:45632"/>
        <dbReference type="ChEBI" id="CHEBI:15377"/>
        <dbReference type="ChEBI" id="CHEBI:43474"/>
        <dbReference type="ChEBI" id="CHEBI:78911"/>
        <dbReference type="ChEBI" id="CHEBI:85342"/>
    </reaction>
</comment>
<comment type="catalytic activity">
    <reaction evidence="16">
        <text>1,2-dihexadecanoyl-sn-glycero-3-phospho-(1D-myo-inositol-3,5-phosphate) + H2O = 1,2-dihexadecanoyl-sn-glycero-3-phospho-(1D-myo-inositol-5-phosphate) + phosphate</text>
        <dbReference type="Rhea" id="RHEA:45636"/>
        <dbReference type="ChEBI" id="CHEBI:15377"/>
        <dbReference type="ChEBI" id="CHEBI:43474"/>
        <dbReference type="ChEBI" id="CHEBI:78994"/>
        <dbReference type="ChEBI" id="CHEBI:84968"/>
    </reaction>
</comment>
<comment type="activity regulation">
    <text evidence="16">Allosterically activated by phosphatidylinositol 5-phosphate (PI5P).</text>
</comment>
<comment type="biophysicochemical properties">
    <kinetics>
        <KM evidence="19">39 uM for PI3P</KM>
        <KM evidence="19">17 uM for PI(3,5)P2</KM>
    </kinetics>
</comment>
<comment type="subunit">
    <text evidence="17 22 23 24 27">Heterodimer with MTMR12 (PubMed:12847286, PubMed:23818870). Interacts with KMT2A/MLL1 (via SET domain) (PubMed:9537414). Interacts with DES in skeletal muscle but not in cardiac muscle (PubMed:21135508). Interacts with SPEG (PubMed:25087613).</text>
</comment>
<comment type="interaction">
    <interactant intactId="EBI-2864109">
        <id>Q13496</id>
    </interactant>
    <interactant intactId="EBI-719094">
        <id>O00499</id>
        <label>BIN1</label>
    </interactant>
    <organismsDiffer>false</organismsDiffer>
    <experiments>6</experiments>
</comment>
<comment type="interaction">
    <interactant intactId="EBI-2864109">
        <id>Q13496</id>
    </interactant>
    <interactant intactId="EBI-1055572">
        <id>P17661</id>
        <label>DES</label>
    </interactant>
    <organismsDiffer>false</organismsDiffer>
    <experiments>13</experiments>
</comment>
<comment type="interaction">
    <interactant intactId="EBI-2864109">
        <id>Q13496</id>
    </interactant>
    <interactant intactId="EBI-355383">
        <id>Q96A65</id>
        <label>EXOC4</label>
    </interactant>
    <organismsDiffer>false</organismsDiffer>
    <experiments>2</experiments>
</comment>
<comment type="interaction">
    <interactant intactId="EBI-2864109">
        <id>Q13496</id>
    </interactant>
    <interactant intactId="EBI-2829520">
        <id>Q9C0I1</id>
        <label>MTMR12</label>
    </interactant>
    <organismsDiffer>false</organismsDiffer>
    <experiments>4</experiments>
</comment>
<comment type="interaction">
    <interactant intactId="EBI-2864109">
        <id>Q13496</id>
    </interactant>
    <interactant intactId="EBI-298565">
        <id>P31001</id>
        <label>Des</label>
    </interactant>
    <organismsDiffer>true</organismsDiffer>
    <experiments>4</experiments>
</comment>
<comment type="interaction">
    <interactant intactId="EBI-2864109">
        <id>Q13496</id>
    </interactant>
    <interactant intactId="EBI-644828">
        <id>O70172</id>
        <label>Pip4k2a</label>
    </interactant>
    <organismsDiffer>true</organismsDiffer>
    <experiments>2</experiments>
</comment>
<comment type="subcellular location">
    <subcellularLocation>
        <location evidence="10 11 17">Cytoplasm</location>
    </subcellularLocation>
    <subcellularLocation>
        <location>Cell membrane</location>
        <topology evidence="11 17">Peripheral membrane protein</topology>
    </subcellularLocation>
    <subcellularLocation>
        <location evidence="14">Cell projection</location>
        <location evidence="14">Filopodium</location>
    </subcellularLocation>
    <subcellularLocation>
        <location evidence="14">Cell projection</location>
        <location evidence="14">Ruffle</location>
    </subcellularLocation>
    <subcellularLocation>
        <location evidence="19">Late endosome</location>
    </subcellularLocation>
    <subcellularLocation>
        <location evidence="2">Cytoplasm</location>
        <location evidence="2">Myofibril</location>
        <location evidence="2">Sarcomere</location>
    </subcellularLocation>
    <text evidence="2 11 14 17 19">Localizes as a dense cytoplasmic network (PubMed:11001925). Also localizes to the plasma membrane, including plasma membrane extensions such as filopodia and ruffles (PubMed:12118066). Predominantly located in the cytoplasm following interaction with MTMR12 (PubMed:12847286). Recruited to the late endosome following EGF stimulation (PubMed:14722070). In skeletal muscles, co-localizes with MTMR12 in the sarcomere (By similarity).</text>
</comment>
<comment type="alternative products">
    <event type="alternative splicing"/>
    <isoform>
        <id>Q13496-1</id>
        <name>1</name>
        <sequence type="displayed"/>
    </isoform>
    <isoform>
        <id>Q13496-2</id>
        <name>2</name>
        <sequence type="described" ref="VSP_056208"/>
    </isoform>
</comment>
<comment type="domain">
    <text>The GRAM domain mediates binding to PI(3,5)P2 and, with lower affinity, to other phosphoinositides.</text>
</comment>
<comment type="disease" evidence="6 7 8 9 12 13 15 18 20 21 23 25 26 28">
    <disease id="DI-00254">
        <name>Myopathy, centronuclear, X-linked</name>
        <acronym>CNMX</acronym>
        <description>A congenital muscle disorder characterized by progressive muscular weakness and wasting involving mainly limb girdle, trunk, and neck muscles. It may also affect distal muscles. Weakness may be present during childhood or adolescence or may not become evident until the third decade of life. Ptosis is a frequent clinical feature. The most prominent histopathologic features include high frequency of centrally located nuclei in muscle fibers not secondary to regeneration, radial arrangement of sarcoplasmic strands around the central nuclei, and predominance and hypotrophy of type 1 fibers.</description>
        <dbReference type="MIM" id="310400"/>
    </disease>
    <text>The disease is caused by variants affecting the gene represented in this entry.</text>
</comment>
<comment type="similarity">
    <text evidence="31">Belongs to the protein-tyrosine phosphatase family. Non-receptor class myotubularin subfamily.</text>
</comment>
<comment type="online information" name="Leiden Muscular Dystrophy pages, Myotubularin 1 (MTM1)">
    <link uri="https://databases.lovd.nl/shared/genes/MTM1"/>
    <text>Leiden Open Variation Database (LOVD)</text>
</comment>
<name>MTM1_HUMAN</name>
<accession>Q13496</accession>
<accession>A6NDB1</accession>
<accession>B7Z491</accession>
<accession>F2Z330</accession>
<accession>Q8NEL1</accession>
<sequence>MASASTSKYNSHSLENESIKRTSRDGVNRDLTEAVPRLPGETLITDKEVIYICPFNGPIKGRVYITNYRLYLRSLETDSSLILDVPLGVISRIEKMGGATSRGENSYGLDITCKDMRNLRFALKQEGHSRRDMFEILTRYAFPLAHSLPLFAFLNEEKFNVDGWTVYNPVEEYRRQGLPNHHWRITFINKCYELCDTYPALLVVPYRASDDDLRRVATFRSRNRIPVLSWIHPENKTVIVRCSQPLVGMSGKRNKDDEKYLDVIRETNKQISKLTIYDARPSVNAVANKATGGGYESDDAYHNAELFFLDIHNIHVMRESLKKVKDIVYPNVEESHWLSSLESTHWLEHIKLVLTGAIQVADKVSSGKSSVLVHCSDGWDRTAQLTSLAMLMLDSFYRSIEGFEILVQKEWISFGHKFASRIGHGDKNHTDADRSPIFLQFIDCVWQMSKQFPTAFEFNEQFLIIILDHLYSCRFGTFLFNCESARERQKVTERTVSLWSLINSNKEKFKNPFYTKEINRVLYPVASMRHLELWVNYYIRWNPRIKQQQPNPVEQRYMELLALRDEYIKRLEELQLANSAKLSDPPTSPSSPSQMMPHVQTHF</sequence>
<reference key="1">
    <citation type="journal article" date="1996" name="Nat. Genet.">
        <title>A gene mutated in X-linked myotubular myopathy defines a new putative tyrosine phosphatase family conserved in yeast.</title>
        <authorList>
            <person name="Laporte J."/>
            <person name="Hu L.-J."/>
            <person name="Kretz C."/>
            <person name="Mandel J.-L."/>
            <person name="Kioschis P."/>
            <person name="Coy J."/>
            <person name="Klauck S.M."/>
            <person name="Poutska A."/>
            <person name="Dahl N."/>
        </authorList>
    </citation>
    <scope>NUCLEOTIDE SEQUENCE [MRNA] (ISOFORM 1)</scope>
</reference>
<reference key="2">
    <citation type="journal article" date="1998" name="Eur. J. Hum. Genet.">
        <title>Genomic organization of the MTM1 gene implicated in X-linked myotubular myopathy.</title>
        <authorList>
            <person name="Laporte J."/>
            <person name="Guiraud-Chaumeil C."/>
            <person name="Tanner S.M."/>
            <person name="Blondeau F."/>
            <person name="Hu L.J."/>
            <person name="Vicaire S."/>
            <person name="Liechti-Gallati S."/>
            <person name="Mandel J.-L."/>
        </authorList>
    </citation>
    <scope>NUCLEOTIDE SEQUENCE [GENOMIC DNA]</scope>
</reference>
<reference key="3">
    <citation type="journal article" date="2004" name="Nat. Genet.">
        <title>Complete sequencing and characterization of 21,243 full-length human cDNAs.</title>
        <authorList>
            <person name="Ota T."/>
            <person name="Suzuki Y."/>
            <person name="Nishikawa T."/>
            <person name="Otsuki T."/>
            <person name="Sugiyama T."/>
            <person name="Irie R."/>
            <person name="Wakamatsu A."/>
            <person name="Hayashi K."/>
            <person name="Sato H."/>
            <person name="Nagai K."/>
            <person name="Kimura K."/>
            <person name="Makita H."/>
            <person name="Sekine M."/>
            <person name="Obayashi M."/>
            <person name="Nishi T."/>
            <person name="Shibahara T."/>
            <person name="Tanaka T."/>
            <person name="Ishii S."/>
            <person name="Yamamoto J."/>
            <person name="Saito K."/>
            <person name="Kawai Y."/>
            <person name="Isono Y."/>
            <person name="Nakamura Y."/>
            <person name="Nagahari K."/>
            <person name="Murakami K."/>
            <person name="Yasuda T."/>
            <person name="Iwayanagi T."/>
            <person name="Wagatsuma M."/>
            <person name="Shiratori A."/>
            <person name="Sudo H."/>
            <person name="Hosoiri T."/>
            <person name="Kaku Y."/>
            <person name="Kodaira H."/>
            <person name="Kondo H."/>
            <person name="Sugawara M."/>
            <person name="Takahashi M."/>
            <person name="Kanda K."/>
            <person name="Yokoi T."/>
            <person name="Furuya T."/>
            <person name="Kikkawa E."/>
            <person name="Omura Y."/>
            <person name="Abe K."/>
            <person name="Kamihara K."/>
            <person name="Katsuta N."/>
            <person name="Sato K."/>
            <person name="Tanikawa M."/>
            <person name="Yamazaki M."/>
            <person name="Ninomiya K."/>
            <person name="Ishibashi T."/>
            <person name="Yamashita H."/>
            <person name="Murakawa K."/>
            <person name="Fujimori K."/>
            <person name="Tanai H."/>
            <person name="Kimata M."/>
            <person name="Watanabe M."/>
            <person name="Hiraoka S."/>
            <person name="Chiba Y."/>
            <person name="Ishida S."/>
            <person name="Ono Y."/>
            <person name="Takiguchi S."/>
            <person name="Watanabe S."/>
            <person name="Yosida M."/>
            <person name="Hotuta T."/>
            <person name="Kusano J."/>
            <person name="Kanehori K."/>
            <person name="Takahashi-Fujii A."/>
            <person name="Hara H."/>
            <person name="Tanase T.-O."/>
            <person name="Nomura Y."/>
            <person name="Togiya S."/>
            <person name="Komai F."/>
            <person name="Hara R."/>
            <person name="Takeuchi K."/>
            <person name="Arita M."/>
            <person name="Imose N."/>
            <person name="Musashino K."/>
            <person name="Yuuki H."/>
            <person name="Oshima A."/>
            <person name="Sasaki N."/>
            <person name="Aotsuka S."/>
            <person name="Yoshikawa Y."/>
            <person name="Matsunawa H."/>
            <person name="Ichihara T."/>
            <person name="Shiohata N."/>
            <person name="Sano S."/>
            <person name="Moriya S."/>
            <person name="Momiyama H."/>
            <person name="Satoh N."/>
            <person name="Takami S."/>
            <person name="Terashima Y."/>
            <person name="Suzuki O."/>
            <person name="Nakagawa S."/>
            <person name="Senoh A."/>
            <person name="Mizoguchi H."/>
            <person name="Goto Y."/>
            <person name="Shimizu F."/>
            <person name="Wakebe H."/>
            <person name="Hishigaki H."/>
            <person name="Watanabe T."/>
            <person name="Sugiyama A."/>
            <person name="Takemoto M."/>
            <person name="Kawakami B."/>
            <person name="Yamazaki M."/>
            <person name="Watanabe K."/>
            <person name="Kumagai A."/>
            <person name="Itakura S."/>
            <person name="Fukuzumi Y."/>
            <person name="Fujimori Y."/>
            <person name="Komiyama M."/>
            <person name="Tashiro H."/>
            <person name="Tanigami A."/>
            <person name="Fujiwara T."/>
            <person name="Ono T."/>
            <person name="Yamada K."/>
            <person name="Fujii Y."/>
            <person name="Ozaki K."/>
            <person name="Hirao M."/>
            <person name="Ohmori Y."/>
            <person name="Kawabata A."/>
            <person name="Hikiji T."/>
            <person name="Kobatake N."/>
            <person name="Inagaki H."/>
            <person name="Ikema Y."/>
            <person name="Okamoto S."/>
            <person name="Okitani R."/>
            <person name="Kawakami T."/>
            <person name="Noguchi S."/>
            <person name="Itoh T."/>
            <person name="Shigeta K."/>
            <person name="Senba T."/>
            <person name="Matsumura K."/>
            <person name="Nakajima Y."/>
            <person name="Mizuno T."/>
            <person name="Morinaga M."/>
            <person name="Sasaki M."/>
            <person name="Togashi T."/>
            <person name="Oyama M."/>
            <person name="Hata H."/>
            <person name="Watanabe M."/>
            <person name="Komatsu T."/>
            <person name="Mizushima-Sugano J."/>
            <person name="Satoh T."/>
            <person name="Shirai Y."/>
            <person name="Takahashi Y."/>
            <person name="Nakagawa K."/>
            <person name="Okumura K."/>
            <person name="Nagase T."/>
            <person name="Nomura N."/>
            <person name="Kikuchi H."/>
            <person name="Masuho Y."/>
            <person name="Yamashita R."/>
            <person name="Nakai K."/>
            <person name="Yada T."/>
            <person name="Nakamura Y."/>
            <person name="Ohara O."/>
            <person name="Isogai T."/>
            <person name="Sugano S."/>
        </authorList>
    </citation>
    <scope>NUCLEOTIDE SEQUENCE [LARGE SCALE MRNA] (ISOFORM 2)</scope>
    <source>
        <tissue>Umbilical cord blood</tissue>
    </source>
</reference>
<reference key="4">
    <citation type="journal article" date="2005" name="Nature">
        <title>The DNA sequence of the human X chromosome.</title>
        <authorList>
            <person name="Ross M.T."/>
            <person name="Grafham D.V."/>
            <person name="Coffey A.J."/>
            <person name="Scherer S."/>
            <person name="McLay K."/>
            <person name="Muzny D."/>
            <person name="Platzer M."/>
            <person name="Howell G.R."/>
            <person name="Burrows C."/>
            <person name="Bird C.P."/>
            <person name="Frankish A."/>
            <person name="Lovell F.L."/>
            <person name="Howe K.L."/>
            <person name="Ashurst J.L."/>
            <person name="Fulton R.S."/>
            <person name="Sudbrak R."/>
            <person name="Wen G."/>
            <person name="Jones M.C."/>
            <person name="Hurles M.E."/>
            <person name="Andrews T.D."/>
            <person name="Scott C.E."/>
            <person name="Searle S."/>
            <person name="Ramser J."/>
            <person name="Whittaker A."/>
            <person name="Deadman R."/>
            <person name="Carter N.P."/>
            <person name="Hunt S.E."/>
            <person name="Chen R."/>
            <person name="Cree A."/>
            <person name="Gunaratne P."/>
            <person name="Havlak P."/>
            <person name="Hodgson A."/>
            <person name="Metzker M.L."/>
            <person name="Richards S."/>
            <person name="Scott G."/>
            <person name="Steffen D."/>
            <person name="Sodergren E."/>
            <person name="Wheeler D.A."/>
            <person name="Worley K.C."/>
            <person name="Ainscough R."/>
            <person name="Ambrose K.D."/>
            <person name="Ansari-Lari M.A."/>
            <person name="Aradhya S."/>
            <person name="Ashwell R.I."/>
            <person name="Babbage A.K."/>
            <person name="Bagguley C.L."/>
            <person name="Ballabio A."/>
            <person name="Banerjee R."/>
            <person name="Barker G.E."/>
            <person name="Barlow K.F."/>
            <person name="Barrett I.P."/>
            <person name="Bates K.N."/>
            <person name="Beare D.M."/>
            <person name="Beasley H."/>
            <person name="Beasley O."/>
            <person name="Beck A."/>
            <person name="Bethel G."/>
            <person name="Blechschmidt K."/>
            <person name="Brady N."/>
            <person name="Bray-Allen S."/>
            <person name="Bridgeman A.M."/>
            <person name="Brown A.J."/>
            <person name="Brown M.J."/>
            <person name="Bonnin D."/>
            <person name="Bruford E.A."/>
            <person name="Buhay C."/>
            <person name="Burch P."/>
            <person name="Burford D."/>
            <person name="Burgess J."/>
            <person name="Burrill W."/>
            <person name="Burton J."/>
            <person name="Bye J.M."/>
            <person name="Carder C."/>
            <person name="Carrel L."/>
            <person name="Chako J."/>
            <person name="Chapman J.C."/>
            <person name="Chavez D."/>
            <person name="Chen E."/>
            <person name="Chen G."/>
            <person name="Chen Y."/>
            <person name="Chen Z."/>
            <person name="Chinault C."/>
            <person name="Ciccodicola A."/>
            <person name="Clark S.Y."/>
            <person name="Clarke G."/>
            <person name="Clee C.M."/>
            <person name="Clegg S."/>
            <person name="Clerc-Blankenburg K."/>
            <person name="Clifford K."/>
            <person name="Cobley V."/>
            <person name="Cole C.G."/>
            <person name="Conquer J.S."/>
            <person name="Corby N."/>
            <person name="Connor R.E."/>
            <person name="David R."/>
            <person name="Davies J."/>
            <person name="Davis C."/>
            <person name="Davis J."/>
            <person name="Delgado O."/>
            <person name="Deshazo D."/>
            <person name="Dhami P."/>
            <person name="Ding Y."/>
            <person name="Dinh H."/>
            <person name="Dodsworth S."/>
            <person name="Draper H."/>
            <person name="Dugan-Rocha S."/>
            <person name="Dunham A."/>
            <person name="Dunn M."/>
            <person name="Durbin K.J."/>
            <person name="Dutta I."/>
            <person name="Eades T."/>
            <person name="Ellwood M."/>
            <person name="Emery-Cohen A."/>
            <person name="Errington H."/>
            <person name="Evans K.L."/>
            <person name="Faulkner L."/>
            <person name="Francis F."/>
            <person name="Frankland J."/>
            <person name="Fraser A.E."/>
            <person name="Galgoczy P."/>
            <person name="Gilbert J."/>
            <person name="Gill R."/>
            <person name="Gloeckner G."/>
            <person name="Gregory S.G."/>
            <person name="Gribble S."/>
            <person name="Griffiths C."/>
            <person name="Grocock R."/>
            <person name="Gu Y."/>
            <person name="Gwilliam R."/>
            <person name="Hamilton C."/>
            <person name="Hart E.A."/>
            <person name="Hawes A."/>
            <person name="Heath P.D."/>
            <person name="Heitmann K."/>
            <person name="Hennig S."/>
            <person name="Hernandez J."/>
            <person name="Hinzmann B."/>
            <person name="Ho S."/>
            <person name="Hoffs M."/>
            <person name="Howden P.J."/>
            <person name="Huckle E.J."/>
            <person name="Hume J."/>
            <person name="Hunt P.J."/>
            <person name="Hunt A.R."/>
            <person name="Isherwood J."/>
            <person name="Jacob L."/>
            <person name="Johnson D."/>
            <person name="Jones S."/>
            <person name="de Jong P.J."/>
            <person name="Joseph S.S."/>
            <person name="Keenan S."/>
            <person name="Kelly S."/>
            <person name="Kershaw J.K."/>
            <person name="Khan Z."/>
            <person name="Kioschis P."/>
            <person name="Klages S."/>
            <person name="Knights A.J."/>
            <person name="Kosiura A."/>
            <person name="Kovar-Smith C."/>
            <person name="Laird G.K."/>
            <person name="Langford C."/>
            <person name="Lawlor S."/>
            <person name="Leversha M."/>
            <person name="Lewis L."/>
            <person name="Liu W."/>
            <person name="Lloyd C."/>
            <person name="Lloyd D.M."/>
            <person name="Loulseged H."/>
            <person name="Loveland J.E."/>
            <person name="Lovell J.D."/>
            <person name="Lozado R."/>
            <person name="Lu J."/>
            <person name="Lyne R."/>
            <person name="Ma J."/>
            <person name="Maheshwari M."/>
            <person name="Matthews L.H."/>
            <person name="McDowall J."/>
            <person name="McLaren S."/>
            <person name="McMurray A."/>
            <person name="Meidl P."/>
            <person name="Meitinger T."/>
            <person name="Milne S."/>
            <person name="Miner G."/>
            <person name="Mistry S.L."/>
            <person name="Morgan M."/>
            <person name="Morris S."/>
            <person name="Mueller I."/>
            <person name="Mullikin J.C."/>
            <person name="Nguyen N."/>
            <person name="Nordsiek G."/>
            <person name="Nyakatura G."/>
            <person name="O'dell C.N."/>
            <person name="Okwuonu G."/>
            <person name="Palmer S."/>
            <person name="Pandian R."/>
            <person name="Parker D."/>
            <person name="Parrish J."/>
            <person name="Pasternak S."/>
            <person name="Patel D."/>
            <person name="Pearce A.V."/>
            <person name="Pearson D.M."/>
            <person name="Pelan S.E."/>
            <person name="Perez L."/>
            <person name="Porter K.M."/>
            <person name="Ramsey Y."/>
            <person name="Reichwald K."/>
            <person name="Rhodes S."/>
            <person name="Ridler K.A."/>
            <person name="Schlessinger D."/>
            <person name="Schueler M.G."/>
            <person name="Sehra H.K."/>
            <person name="Shaw-Smith C."/>
            <person name="Shen H."/>
            <person name="Sheridan E.M."/>
            <person name="Shownkeen R."/>
            <person name="Skuce C.D."/>
            <person name="Smith M.L."/>
            <person name="Sotheran E.C."/>
            <person name="Steingruber H.E."/>
            <person name="Steward C.A."/>
            <person name="Storey R."/>
            <person name="Swann R.M."/>
            <person name="Swarbreck D."/>
            <person name="Tabor P.E."/>
            <person name="Taudien S."/>
            <person name="Taylor T."/>
            <person name="Teague B."/>
            <person name="Thomas K."/>
            <person name="Thorpe A."/>
            <person name="Timms K."/>
            <person name="Tracey A."/>
            <person name="Trevanion S."/>
            <person name="Tromans A.C."/>
            <person name="d'Urso M."/>
            <person name="Verduzco D."/>
            <person name="Villasana D."/>
            <person name="Waldron L."/>
            <person name="Wall M."/>
            <person name="Wang Q."/>
            <person name="Warren J."/>
            <person name="Warry G.L."/>
            <person name="Wei X."/>
            <person name="West A."/>
            <person name="Whitehead S.L."/>
            <person name="Whiteley M.N."/>
            <person name="Wilkinson J.E."/>
            <person name="Willey D.L."/>
            <person name="Williams G."/>
            <person name="Williams L."/>
            <person name="Williamson A."/>
            <person name="Williamson H."/>
            <person name="Wilming L."/>
            <person name="Woodmansey R.L."/>
            <person name="Wray P.W."/>
            <person name="Yen J."/>
            <person name="Zhang J."/>
            <person name="Zhou J."/>
            <person name="Zoghbi H."/>
            <person name="Zorilla S."/>
            <person name="Buck D."/>
            <person name="Reinhardt R."/>
            <person name="Poustka A."/>
            <person name="Rosenthal A."/>
            <person name="Lehrach H."/>
            <person name="Meindl A."/>
            <person name="Minx P.J."/>
            <person name="Hillier L.W."/>
            <person name="Willard H.F."/>
            <person name="Wilson R.K."/>
            <person name="Waterston R.H."/>
            <person name="Rice C.M."/>
            <person name="Vaudin M."/>
            <person name="Coulson A."/>
            <person name="Nelson D.L."/>
            <person name="Weinstock G."/>
            <person name="Sulston J.E."/>
            <person name="Durbin R.M."/>
            <person name="Hubbard T."/>
            <person name="Gibbs R.A."/>
            <person name="Beck S."/>
            <person name="Rogers J."/>
            <person name="Bentley D.R."/>
        </authorList>
    </citation>
    <scope>NUCLEOTIDE SEQUENCE [LARGE SCALE GENOMIC DNA]</scope>
</reference>
<reference key="5">
    <citation type="submission" date="2005-07" db="EMBL/GenBank/DDBJ databases">
        <authorList>
            <person name="Mural R.J."/>
            <person name="Istrail S."/>
            <person name="Sutton G."/>
            <person name="Florea L."/>
            <person name="Halpern A.L."/>
            <person name="Mobarry C.M."/>
            <person name="Lippert R."/>
            <person name="Walenz B."/>
            <person name="Shatkay H."/>
            <person name="Dew I."/>
            <person name="Miller J.R."/>
            <person name="Flanigan M.J."/>
            <person name="Edwards N.J."/>
            <person name="Bolanos R."/>
            <person name="Fasulo D."/>
            <person name="Halldorsson B.V."/>
            <person name="Hannenhalli S."/>
            <person name="Turner R."/>
            <person name="Yooseph S."/>
            <person name="Lu F."/>
            <person name="Nusskern D.R."/>
            <person name="Shue B.C."/>
            <person name="Zheng X.H."/>
            <person name="Zhong F."/>
            <person name="Delcher A.L."/>
            <person name="Huson D.H."/>
            <person name="Kravitz S.A."/>
            <person name="Mouchard L."/>
            <person name="Reinert K."/>
            <person name="Remington K.A."/>
            <person name="Clark A.G."/>
            <person name="Waterman M.S."/>
            <person name="Eichler E.E."/>
            <person name="Adams M.D."/>
            <person name="Hunkapiller M.W."/>
            <person name="Myers E.W."/>
            <person name="Venter J.C."/>
        </authorList>
    </citation>
    <scope>NUCLEOTIDE SEQUENCE [LARGE SCALE GENOMIC DNA]</scope>
</reference>
<reference key="6">
    <citation type="journal article" date="2004" name="Genome Res.">
        <title>The status, quality, and expansion of the NIH full-length cDNA project: the Mammalian Gene Collection (MGC).</title>
        <authorList>
            <consortium name="The MGC Project Team"/>
        </authorList>
    </citation>
    <scope>NUCLEOTIDE SEQUENCE [LARGE SCALE MRNA] (ISOFORM 1)</scope>
    <source>
        <tissue>Testis</tissue>
    </source>
</reference>
<reference key="7">
    <citation type="journal article" date="1998" name="Nat. Genet.">
        <title>Association of SET domain and myotubularin-related proteins modulates growth control.</title>
        <authorList>
            <person name="Cui X."/>
            <person name="De Vivo I."/>
            <person name="Slany R."/>
            <person name="Miyamoto A."/>
            <person name="Firestein R."/>
            <person name="Cleary M.L."/>
        </authorList>
    </citation>
    <scope>FUNCTION</scope>
    <scope>INTERACTION WITH KMT2A/MLL1</scope>
</reference>
<reference key="8">
    <citation type="journal article" date="2000" name="Hum. Mutat.">
        <title>MTM1 mutations in X-linked myotubular myopathy.</title>
        <authorList>
            <person name="Laporte J."/>
            <person name="Biancalana V."/>
            <person name="Tanner S.M."/>
            <person name="Kress W."/>
            <person name="Schneider V."/>
            <person name="Wallgren-Pettersson C."/>
            <person name="Herger F."/>
            <person name="Buj-Bello A."/>
            <person name="Blondeau F."/>
            <person name="Liechti-Gallati S."/>
            <person name="Mandel J.-L."/>
        </authorList>
    </citation>
    <scope>REVIEW</scope>
    <scope>VARIANTS CNMX SER-346; ASP-374 AND CYS-411</scope>
</reference>
<reference key="9">
    <citation type="journal article" date="2000" name="Hum. Mol. Genet.">
        <title>Myotubularin, a phosphatase deficient in myotubular myopathy, acts on phosphatidylinositol 3-kinase and phosphatidylinositol 3-phosphate pathway.</title>
        <authorList>
            <person name="Blondeau F."/>
            <person name="Laporte J."/>
            <person name="Bodin S."/>
            <person name="Superti-Furga G."/>
            <person name="Payrastre B."/>
            <person name="Mandel J.L."/>
        </authorList>
    </citation>
    <scope>FUNCTION</scope>
    <scope>CATALYTIC ACTIVITY</scope>
    <scope>SUBCELLULAR LOCATION</scope>
    <scope>MUTAGENESIS OF ASP-278; CYS-375; ASP-377; ASP-380; ASP-394; GLU-410 AND ASP-443</scope>
</reference>
<reference key="10">
    <citation type="journal article" date="2000" name="Proc. Natl. Acad. Sci. U.S.A.">
        <title>Myotubularin, a protein tyrosine phosphatase mutated in myotubular myopathy, dephosphorylates the lipid second messenger, phosphatidylinositol 3-phosphate.</title>
        <authorList>
            <person name="Taylor G.S."/>
            <person name="Maehama T."/>
            <person name="Dixon J.E."/>
        </authorList>
    </citation>
    <scope>FUNCTION</scope>
    <scope>CATALYTIC ACTIVITY</scope>
    <scope>SUBCELLULAR LOCATION</scope>
    <scope>CHARACTERIZATION OF VARIANTS LEU-205; LEU-241; ASN-376; ARG-378 AND CYS-397</scope>
    <scope>MUTAGENESIS OF CYS-375</scope>
</reference>
<reference key="11">
    <citation type="journal article" date="2002" name="J. Cell Sci.">
        <title>The PtdIns3P phosphatase myotubularin is a cytoplasmic protein that also localizes to Rac1-inducible plasma membrane ruffles.</title>
        <authorList>
            <person name="Laporte J."/>
            <person name="Blondeau F."/>
            <person name="Gansmuller A."/>
            <person name="Lutz Y."/>
            <person name="Vonesch J.L."/>
            <person name="Mandel J.L."/>
        </authorList>
    </citation>
    <scope>SUBCELLULAR LOCATION</scope>
    <scope>MUTAGENESIS OF ASP-257; ASP-278; CYS-375; ASP-377 AND ASP-380</scope>
</reference>
<reference key="12">
    <citation type="journal article" date="2003" name="Curr. Biol.">
        <title>Phosphatidylinositol-5-phosphate activation and conserved substrate specificity of the myotubularin phosphatidylinositol 3-phosphatases.</title>
        <authorList>
            <person name="Schaletzky J."/>
            <person name="Dove S.K."/>
            <person name="Short B."/>
            <person name="Lorenzo O."/>
            <person name="Clague M.J."/>
            <person name="Barr F.A."/>
        </authorList>
    </citation>
    <scope>FUNCTION</scope>
    <scope>CATALYTIC ACTIVITY</scope>
    <scope>ACTIVITY REGULATION</scope>
    <scope>CHARACTERIZATION OF VARIANTS CYS-69; GLY-184; LEU-241 AND GLN-421</scope>
    <scope>MUTAGENESIS OF LYS-114; ARG-220 AND CYS-375</scope>
</reference>
<reference key="13">
    <citation type="journal article" date="2003" name="Proc. Natl. Acad. Sci. U.S.A.">
        <title>Identification of myotubularin as the lipid phosphatase catalytic subunit associated with the 3-phosphatase adapter protein, 3-PAP.</title>
        <authorList>
            <person name="Nandurkar H.H."/>
            <person name="Layton M."/>
            <person name="Laporte J."/>
            <person name="Selan C."/>
            <person name="Corcoran L."/>
            <person name="Caldwell K.K."/>
            <person name="Mochizuki Y."/>
            <person name="Majerus P.W."/>
            <person name="Mitchell C.A."/>
        </authorList>
    </citation>
    <scope>CATALYTIC ACTIVITY</scope>
    <scope>INTERACTION WITH MTMR12</scope>
    <scope>SUBCELLULAR LOCATION</scope>
    <scope>IDENTIFICATION BY MASS SPECTROMETRY</scope>
</reference>
<reference key="14">
    <citation type="journal article" date="2004" name="J. Biol. Chem.">
        <title>Myotubularin regulates the function of the late endosome through the gram domain-phosphatidylinositol 3,5-bisphosphate interaction.</title>
        <authorList>
            <person name="Tsujita K."/>
            <person name="Itoh T."/>
            <person name="Ijuin T."/>
            <person name="Yamamoto A."/>
            <person name="Shisheva A."/>
            <person name="Laporte J."/>
            <person name="Takenawa T."/>
        </authorList>
    </citation>
    <scope>FUNCTION</scope>
    <scope>CATALYTIC ACTIVITY</scope>
    <scope>BIOPHYSICOCHEMICAL PROPERTIES</scope>
    <scope>SUBCELLULAR LOCATION</scope>
    <scope>ROLE OF GRAM DOMAIN</scope>
    <scope>CHARACTERIZATION OF VARIANTS PHE-49; CYS-69; PHE-70 AND PRO-87</scope>
</reference>
<reference key="15">
    <citation type="journal article" date="2006" name="Nat. Biotechnol.">
        <title>A probability-based approach for high-throughput protein phosphorylation analysis and site localization.</title>
        <authorList>
            <person name="Beausoleil S.A."/>
            <person name="Villen J."/>
            <person name="Gerber S.A."/>
            <person name="Rush J."/>
            <person name="Gygi S.P."/>
        </authorList>
    </citation>
    <scope>PHOSPHORYLATION [LARGE SCALE ANALYSIS] AT THR-495</scope>
    <scope>IDENTIFICATION BY MASS SPECTROMETRY [LARGE SCALE ANALYSIS]</scope>
    <source>
        <tissue>Cervix carcinoma</tissue>
    </source>
</reference>
<reference key="16">
    <citation type="journal article" date="2008" name="Proc. Natl. Acad. Sci. U.S.A.">
        <title>A quantitative atlas of mitotic phosphorylation.</title>
        <authorList>
            <person name="Dephoure N."/>
            <person name="Zhou C."/>
            <person name="Villen J."/>
            <person name="Beausoleil S.A."/>
            <person name="Bakalarski C.E."/>
            <person name="Elledge S.J."/>
            <person name="Gygi S.P."/>
        </authorList>
    </citation>
    <scope>PHOSPHORYLATION [LARGE SCALE ANALYSIS] AT SER-588</scope>
    <scope>IDENTIFICATION BY MASS SPECTROMETRY [LARGE SCALE ANALYSIS]</scope>
    <source>
        <tissue>Cervix carcinoma</tissue>
    </source>
</reference>
<reference key="17">
    <citation type="journal article" date="2010" name="Sci. Signal.">
        <title>Quantitative phosphoproteomics reveals widespread full phosphorylation site occupancy during mitosis.</title>
        <authorList>
            <person name="Olsen J.V."/>
            <person name="Vermeulen M."/>
            <person name="Santamaria A."/>
            <person name="Kumar C."/>
            <person name="Miller M.L."/>
            <person name="Jensen L.J."/>
            <person name="Gnad F."/>
            <person name="Cox J."/>
            <person name="Jensen T.S."/>
            <person name="Nigg E.A."/>
            <person name="Brunak S."/>
            <person name="Mann M."/>
        </authorList>
    </citation>
    <scope>PHOSPHORYLATION [LARGE SCALE ANALYSIS] AT SER-588</scope>
    <scope>IDENTIFICATION BY MASS SPECTROMETRY [LARGE SCALE ANALYSIS]</scope>
    <source>
        <tissue>Cervix carcinoma</tissue>
    </source>
</reference>
<reference key="18">
    <citation type="journal article" date="2011" name="BMC Syst. Biol.">
        <title>Initial characterization of the human central proteome.</title>
        <authorList>
            <person name="Burkard T.R."/>
            <person name="Planyavsky M."/>
            <person name="Kaupe I."/>
            <person name="Breitwieser F.P."/>
            <person name="Buerckstuemmer T."/>
            <person name="Bennett K.L."/>
            <person name="Superti-Furga G."/>
            <person name="Colinge J."/>
        </authorList>
    </citation>
    <scope>IDENTIFICATION BY MASS SPECTROMETRY [LARGE SCALE ANALYSIS]</scope>
</reference>
<reference key="19">
    <citation type="journal article" date="2011" name="J. Clin. Invest.">
        <title>Myotubularin controls desmin intermediate filament architecture and mitochondrial dynamics in human and mouse skeletal muscle.</title>
        <authorList>
            <person name="Hnia K."/>
            <person name="Tronchere H."/>
            <person name="Tomczak K.K."/>
            <person name="Amoasii L."/>
            <person name="Schultz P."/>
            <person name="Beggs A.H."/>
            <person name="Payrastre B."/>
            <person name="Mandel J.L."/>
            <person name="Laporte J."/>
        </authorList>
    </citation>
    <scope>FUNCTION</scope>
    <scope>INTERACTION WITH DES</scope>
    <scope>CHARACTERIZATION OF VARIANTS GLY-184; LEU-205; CYS-241 AND GLN-421</scope>
    <scope>MUTAGENESIS OF HIS-181; TYR-206; SER-209; LYS-255; LYS-269; ASP-278; CYS-375; ASP-380 AND SER-420</scope>
</reference>
<reference key="20">
    <citation type="journal article" date="2013" name="J. Proteome Res.">
        <title>Toward a comprehensive characterization of a human cancer cell phosphoproteome.</title>
        <authorList>
            <person name="Zhou H."/>
            <person name="Di Palma S."/>
            <person name="Preisinger C."/>
            <person name="Peng M."/>
            <person name="Polat A.N."/>
            <person name="Heck A.J."/>
            <person name="Mohammed S."/>
        </authorList>
    </citation>
    <scope>PHOSPHORYLATION [LARGE SCALE ANALYSIS] AT SER-13 AND SER-18</scope>
    <scope>IDENTIFICATION BY MASS SPECTROMETRY [LARGE SCALE ANALYSIS]</scope>
    <source>
        <tissue>Cervix carcinoma</tissue>
        <tissue>Erythroleukemia</tissue>
    </source>
</reference>
<reference key="21">
    <citation type="journal article" date="2013" name="PLoS Genet.">
        <title>Loss of catalytically inactive lipid phosphatase myotubularin-related protein 12 impairs myotubularin stability and promotes centronuclear myopathy in zebrafish.</title>
        <authorList>
            <person name="Gupta V.A."/>
            <person name="Hnia K."/>
            <person name="Smith L.L."/>
            <person name="Gundry S.R."/>
            <person name="McIntire J.E."/>
            <person name="Shimazu J."/>
            <person name="Bass J.R."/>
            <person name="Talbot E.A."/>
            <person name="Amoasii L."/>
            <person name="Goldman N.E."/>
            <person name="Laporte J."/>
            <person name="Beggs A.H."/>
        </authorList>
    </citation>
    <scope>FUNCTION</scope>
    <scope>INTERACTION WITH MTMR12</scope>
    <scope>MUTAGENESIS OF CYS-375 AND 421-ARG--PHE-603</scope>
    <scope>VARIANTS CNMX PHE-49; CYS-69; GLY-184; LEU-205; CYS-241 AND GLN-421</scope>
</reference>
<reference key="22">
    <citation type="journal article" date="2014" name="Am. J. Hum. Genet.">
        <title>SPEG interacts with myotubularin, and its deficiency causes centronuclear myopathy with dilated cardiomyopathy.</title>
        <authorList>
            <person name="Agrawal P.B."/>
            <person name="Pierson C.R."/>
            <person name="Joshi M."/>
            <person name="Liu X."/>
            <person name="Ravenscroft G."/>
            <person name="Moghadaszadeh B."/>
            <person name="Talabere T."/>
            <person name="Viola M."/>
            <person name="Swanson L.C."/>
            <person name="Haliloglu G."/>
            <person name="Talim B."/>
            <person name="Yau K.S."/>
            <person name="Allcock R.J."/>
            <person name="Laing N.G."/>
            <person name="Perrella M.A."/>
            <person name="Beggs A.H."/>
        </authorList>
    </citation>
    <scope>INTERACTION WITH SPEG</scope>
</reference>
<reference key="23">
    <citation type="journal article" date="1997" name="Hum. Mol. Genet.">
        <title>Characterization of mutations in the myotubularin gene in twenty six patients with X-linked myotubular myopathy.</title>
        <authorList>
            <person name="de Gouyon B.M."/>
            <person name="Zhao W."/>
            <person name="Laporte J."/>
            <person name="Mandel J.-L."/>
            <person name="Metzenberg A."/>
            <person name="Herman G.E."/>
        </authorList>
    </citation>
    <scope>VARIANTS CNMX CYS-69; GLY-184; ASN-198; LEU-241; ARG-317; CYS-397; LYS-404; PRO-406; GLN-421 AND ARG-499</scope>
</reference>
<reference key="24">
    <citation type="journal article" date="1997" name="Hum. Mol. Genet.">
        <title>Mutations in the MTM1 gene implicated in X-linked myotubular myopathy.</title>
        <authorList>
            <person name="Laporte J."/>
            <person name="Guiraud-Chaumeil C."/>
            <person name="Vincent M.-C."/>
            <person name="Mandel J.-L."/>
            <person name="Tanner S.M."/>
            <person name="Liechti-Gallati S."/>
            <person name="Wallgren-Pettersson C."/>
            <person name="Dahl N."/>
            <person name="Kress W."/>
            <person name="Bolhuis P.A."/>
            <person name="Fardeau M."/>
            <person name="Samson F."/>
            <person name="Bertini E."/>
        </authorList>
    </citation>
    <scope>VARIANTS CNMX CYS-69; PHE-70; PRO-87; SER-189; LEU-205; PRO-229; CYS-241; ASN-376; ARG-378; CYS-397; ALA-402; GLN-421; ASN-431; ASN-433 AND PRO-469</scope>
</reference>
<reference key="25">
    <citation type="journal article" date="1998" name="Neuromuscul. Disord.">
        <title>MTM1 gene mutations in Japanese patients with the severe infantile form of myotubular myopathy.</title>
        <authorList>
            <person name="Nishino I."/>
            <person name="Minami N."/>
            <person name="Kobayashi O."/>
            <person name="Ikezawa M."/>
            <person name="Goto Y."/>
            <person name="Arahata K."/>
            <person name="Nonaka I."/>
        </authorList>
    </citation>
    <scope>VARIANT CNMX VAL-402</scope>
</reference>
<reference key="26">
    <citation type="journal article" date="1999" name="Clin. Genet.">
        <title>Germline mosaicism in X-linked myotubular myopathy.</title>
        <authorList>
            <person name="Haene B.G."/>
            <person name="Rogers R.C."/>
            <person name="Schwartz C.E."/>
        </authorList>
    </citation>
    <scope>VARIANT CNMX GLU-378</scope>
</reference>
<reference key="27">
    <citation type="journal article" date="1999" name="Hum. Mutat.">
        <title>Identification of novel mutations in the MTM1 gene causing severe and mild forms of X-linked myotubular myopathy.</title>
        <authorList>
            <person name="Buj-Bello A."/>
            <person name="Biancalana V."/>
            <person name="Moutou C."/>
            <person name="Laporte J."/>
            <person name="Mandel J.-L."/>
        </authorList>
    </citation>
    <scope>VARIANTS CNMX SER-179; THR-225; CYS-241; SER-264; GLY-294 DEL; ARG-378 AND ASN-510</scope>
</reference>
<reference key="28">
    <citation type="journal article" date="1999" name="Neuromuscul. Disord.">
        <title>Characterization of 34 novel and six known MTM1 gene mutations in 47 unrelated X-linked myotubular myopathy patients.</title>
        <authorList>
            <person name="Tanner S.M."/>
            <person name="Schneider V."/>
            <person name="Thomas N.S.T."/>
            <person name="Clarke A."/>
            <person name="Lazarou L."/>
            <person name="Liechti-Gallati S."/>
        </authorList>
    </citation>
    <scope>VARIANTS CNMX LEU-205; THR-225; CYS-230; ARG-232; CYS-241; ARG-402 AND TYR-444</scope>
</reference>
<reference key="29">
    <citation type="journal article" date="2002" name="Hum. Mutat.">
        <title>Characterization of mutations in fifty North American patients with X-linked myotubular myopathy.</title>
        <authorList>
            <person name="Herman G.E."/>
            <person name="Kopacz K."/>
            <person name="Zhao W."/>
            <person name="Mills P.L."/>
            <person name="Metzenberg A."/>
            <person name="Das S."/>
        </authorList>
    </citation>
    <scope>VARIANTS CNMX PHE-49; CYS-69; SER-179; ILE-186; LEU-205; MET-227; PRO-228; CYS-241; GLY-279; ARG-378; PRO-391; CYS-397; ARG-402 AND GLN-421</scope>
</reference>
<reference key="30">
    <citation type="journal article" date="2002" name="Neuromuscul. Disord.">
        <title>Rapid scanning of myotubularin (MTM1) gene by denaturing high-performance liquid chromatography (DHPLC).</title>
        <authorList>
            <person name="Flex E."/>
            <person name="De Luca A."/>
            <person name="D'Apice M.R."/>
            <person name="Buccino A."/>
            <person name="Dallapiccola B."/>
            <person name="Novelli G."/>
        </authorList>
    </citation>
    <scope>VARIANTS CNMX ILE-197; SER-199; ARG-378 AND ARG-402</scope>
</reference>
<reference key="31">
    <citation type="journal article" date="2003" name="Clin. Genet.">
        <title>X-linked myotubular myopathy in a family with three adult survivors.</title>
        <authorList>
            <person name="Yu S."/>
            <person name="Manson J."/>
            <person name="White S."/>
            <person name="Bourne A."/>
            <person name="Waddy H."/>
            <person name="Davis M."/>
            <person name="Haan E."/>
        </authorList>
    </citation>
    <scope>VARIANT CNMX LYS-157</scope>
</reference>
<reference key="32">
    <citation type="journal article" date="2003" name="Hum. Genet.">
        <title>Characterisation of mutations in 77 patients with X-linked myotubular myopathy, including a family with a very mild phenotype.</title>
        <authorList>
            <person name="Biancalana V."/>
            <person name="Caron O."/>
            <person name="Gallati S."/>
            <person name="Baas F."/>
            <person name="Kress W."/>
            <person name="Novelli G."/>
            <person name="D'Apice M.R."/>
            <person name="Lagier-Tourenne C."/>
            <person name="Buj-Bello A."/>
            <person name="Romero N.B."/>
            <person name="Mandel J.-L."/>
        </authorList>
    </citation>
    <scope>VARIANTS CNMX LYS-47 DEL; ASP-68; PRO-69; SER-69; PHE-70; LYS-180; LEU-184; SER-202; LEU-205; THR-226; CYS-230; CYS-241; CYS-346; GLY-364; ASP-389; CYS-397; GLN-421; PRO-469; PRO-470 AND TYR-481</scope>
</reference>
<reference key="33">
    <citation type="journal article" date="2006" name="Neuromuscul. Disord.">
        <title>Extreme phenotypic variability in a German family with X-linked myotubular myopathy associated with E404K mutation in MTM1.</title>
        <authorList>
            <person name="Hoffjan S."/>
            <person name="Thiels C."/>
            <person name="Vorgerd M."/>
            <person name="Neuen-Jacob E."/>
            <person name="Epplen J.T."/>
            <person name="Kress W."/>
        </authorList>
    </citation>
    <scope>VARIANT CNMX LYS-404</scope>
</reference>
<reference key="34">
    <citation type="journal article" date="2008" name="J. Formos. Med. Assoc.">
        <title>X-linked myotubular myopathy with a novel MTM1 mutation in a Taiwanese child.</title>
        <authorList>
            <person name="Chang C.Y."/>
            <person name="Lin S.P."/>
            <person name="Lin H.Y."/>
            <person name="Chuang C.K."/>
            <person name="Ho C.S."/>
            <person name="Su Y.N."/>
        </authorList>
    </citation>
    <scope>VARIANT CNMX TYR-387</scope>
</reference>
<organism>
    <name type="scientific">Homo sapiens</name>
    <name type="common">Human</name>
    <dbReference type="NCBI Taxonomy" id="9606"/>
    <lineage>
        <taxon>Eukaryota</taxon>
        <taxon>Metazoa</taxon>
        <taxon>Chordata</taxon>
        <taxon>Craniata</taxon>
        <taxon>Vertebrata</taxon>
        <taxon>Euteleostomi</taxon>
        <taxon>Mammalia</taxon>
        <taxon>Eutheria</taxon>
        <taxon>Euarchontoglires</taxon>
        <taxon>Primates</taxon>
        <taxon>Haplorrhini</taxon>
        <taxon>Catarrhini</taxon>
        <taxon>Hominidae</taxon>
        <taxon>Homo</taxon>
    </lineage>
</organism>
<protein>
    <recommendedName>
        <fullName evidence="30">Myotubularin</fullName>
        <ecNumber evidence="16 19">3.1.3.95</ecNumber>
    </recommendedName>
    <alternativeName>
        <fullName evidence="32 33">Phosphatidylinositol-3,5-bisphosphate 3-phosphatase</fullName>
    </alternativeName>
    <alternativeName>
        <fullName evidence="32 33">Phosphatidylinositol-3-phosphate phosphatase</fullName>
    </alternativeName>
</protein>